<sequence length="509" mass="58001">MGCGCSSHPEDDWMENIDVCENCHYPIVPLDGKGTLLIRNGSEVRDPLVTYEGSNPPASPLQDNLVIALHSYEPSHDGDLGFEKGEQLRILEQSGEWWKAQSLTTGQEGFIPFNFVAKANSLEPEPWFFKNLSRKDAERQLLAPGNTHGSFLIRESESTAGSFSLSVRDFDQNQGEVVKHYKIRNLDNGGFYISPRITFPGLHELVRHYTNASDGLCTRLSRPCQTQKPQKPWWEDEWEVPRETLKLVERLGAGQFGEVWMGYYNGHTKVAVKSLKQGSMSPDAFLAEANLMKQLQHQRLVRLYAVVTQEPIYIITEYMENGSLVDFLKTPSGIKLTINKLLDMAAQIAEGMAFIEERNYIHRDLRAANILVSDTLSCKIADFGLARLIEDNEYTAREGAKFPIKWTAPEAINYGTFTIKSDVWSFGILLTEIVTHGRIPYPGMTNPEVIQNLERGYRMVRPDNCPEELYQLMRLCWKERPEDRPTFDYLRSVLEDFFTATEGQYQPQP</sequence>
<keyword id="KW-0002">3D-structure</keyword>
<keyword id="KW-0025">Alternative splicing</keyword>
<keyword id="KW-0067">ATP-binding</keyword>
<keyword id="KW-1003">Cell membrane</keyword>
<keyword id="KW-0160">Chromosomal rearrangement</keyword>
<keyword id="KW-0963">Cytoplasm</keyword>
<keyword id="KW-0225">Disease variant</keyword>
<keyword id="KW-0945">Host-virus interaction</keyword>
<keyword id="KW-1017">Isopeptide bond</keyword>
<keyword id="KW-0418">Kinase</keyword>
<keyword id="KW-0449">Lipoprotein</keyword>
<keyword id="KW-0472">Membrane</keyword>
<keyword id="KW-0519">Myristate</keyword>
<keyword id="KW-0547">Nucleotide-binding</keyword>
<keyword id="KW-0564">Palmitate</keyword>
<keyword id="KW-0597">Phosphoprotein</keyword>
<keyword id="KW-1267">Proteomics identification</keyword>
<keyword id="KW-0656">Proto-oncogene</keyword>
<keyword id="KW-1185">Reference proteome</keyword>
<keyword id="KW-0727">SH2 domain</keyword>
<keyword id="KW-0728">SH3 domain</keyword>
<keyword id="KW-0808">Transferase</keyword>
<keyword id="KW-0829">Tyrosine-protein kinase</keyword>
<keyword id="KW-0832">Ubl conjugation</keyword>
<protein>
    <recommendedName>
        <fullName>Tyrosine-protein kinase Lck</fullName>
        <ecNumber>2.7.10.2</ecNumber>
    </recommendedName>
    <alternativeName>
        <fullName>Leukocyte C-terminal Src kinase</fullName>
        <shortName>LSK</shortName>
    </alternativeName>
    <alternativeName>
        <fullName>Lymphocyte cell-specific protein-tyrosine kinase</fullName>
    </alternativeName>
    <alternativeName>
        <fullName>Protein YT16</fullName>
    </alternativeName>
    <alternativeName>
        <fullName>Proto-oncogene Lck</fullName>
    </alternativeName>
    <alternativeName>
        <fullName>T cell-specific protein-tyrosine kinase</fullName>
    </alternativeName>
    <alternativeName>
        <fullName>p56-LCK</fullName>
    </alternativeName>
</protein>
<comment type="function">
    <text evidence="15 17 20 21 22 23 26 30 32">Non-receptor tyrosine-protein kinase that plays an essential role in the selection and maturation of developing T-cells in the thymus and in the function of mature T-cells. Plays a key role in T-cell antigen receptor (TCR)-linked signal transduction pathways. Constitutively associated with the cytoplasmic portions of the CD4 and CD8 surface receptors. Association of the TCR with a peptide antigen-bound MHC complex facilitates the interaction of CD4 and CD8 with MHC class II and class I molecules, respectively, thereby recruiting the associated LCK protein to the vicinity of the TCR/CD3 complex. LCK then phosphorylates tyrosine residues within the immunoreceptor tyrosine-based activation motifs (ITAM) of the cytoplasmic tails of the TCR-gamma chains and CD3 subunits, initiating the TCR/CD3 signaling pathway. Once stimulated, the TCR recruits the tyrosine kinase ZAP70, that becomes phosphorylated and activated by LCK. Following this, a large number of signaling molecules are recruited, ultimately leading to lymphokine production. LCK also contributes to signaling by other receptor molecules. Associates directly with the cytoplasmic tail of CD2, which leads to hyperphosphorylation and activation of LCK. Also plays a role in the IL2 receptor-linked signaling pathway that controls the T-cell proliferative response. Binding of IL2 to its receptor results in increased activity of LCK. Is expressed at all stages of thymocyte development and is required for the regulation of maturation events that are governed by both pre-TCR and mature alpha beta TCR. Phosphorylates other substrates including RUNX3, PTK2B/PYK2, the microtubule-associated protein MAPT, RHOH or TYROBP. Interacts with FYB2 (PubMed:27335501).</text>
</comment>
<comment type="catalytic activity">
    <reaction evidence="6">
        <text>L-tyrosyl-[protein] + ATP = O-phospho-L-tyrosyl-[protein] + ADP + H(+)</text>
        <dbReference type="Rhea" id="RHEA:10596"/>
        <dbReference type="Rhea" id="RHEA-COMP:10136"/>
        <dbReference type="Rhea" id="RHEA-COMP:20101"/>
        <dbReference type="ChEBI" id="CHEBI:15378"/>
        <dbReference type="ChEBI" id="CHEBI:30616"/>
        <dbReference type="ChEBI" id="CHEBI:46858"/>
        <dbReference type="ChEBI" id="CHEBI:61978"/>
        <dbReference type="ChEBI" id="CHEBI:456216"/>
        <dbReference type="EC" id="2.7.10.2"/>
    </reaction>
</comment>
<comment type="activity regulation">
    <text evidence="24">The relative activities of the inhibitory tyrosine-protein kinase CSK and the activating tyrosine-protein phosphatase PTPRC/CD45 determine the level of LCK activity. These interactions allow rapid and efficient activation of LCK in response to TCR stimulation.</text>
</comment>
<comment type="subunit">
    <text evidence="8 9 11 12 13 14 18 19 33 34 36 39">Binds to the cytoplasmic domain of cell surface receptors, such as AXL, CD2, CD4, CD5, CD8, CD44, CD45 and CD122. Also binds to effector molecules, such as PI4K, VAV1, RASA1, FYB1 and to other protein kinases including CDK1, RAF1, ZAP70 and SYK. Binds to phosphatidylinositol 3'-kinase (PI3K) from T-lymphocytes through its SH3 domain and to the tyrosine phosphorylated form of KHDRBS1/p70 through its SH2 domain. This interaction inhibits its tyrosine-kinase activity. Interacts with SQSTM1. Interacts with phosphorylated LIME1. Interacts with CBLB and PTPRH. Interacts with RUNX3. Forms a signaling complex with EPHA1, PTK2B and PI3-KINASE; upon activation by EFNA1 which may regulate T-lymphocyte migration. Associates with ZAP70 and RHOH; these interactions allow LCK-mediated RHOH and CD3 subunit phosphorylation in the presence of functional ZAP70. Interacts with UNC119; this interaction plays a crucial role in activation of LCK. Interacts with CEACAM1 (via cytoplasmic domain); mediates CEACAM1 phosphorylation resulting in PTPN6 recruitment that dephosphorylates TCR stimulation-induced CD247 and ZAP70 (PubMed:18424730). Interacts with CD160. Interacts with CD48 (PubMed:12007789).</text>
</comment>
<comment type="subunit">
    <text evidence="28">(Microbial infection) Interacts with herpes simplex virus 1 UL46; this interaction activates LCK.</text>
</comment>
<comment type="subunit">
    <text evidence="38">(Microbial infection) Interacts with HIV-1 Nef through its SH3 domain.</text>
</comment>
<comment type="interaction">
    <interactant intactId="EBI-1348">
        <id>P06239</id>
    </interactant>
    <interactant intactId="EBI-1536151">
        <id>O14672</id>
        <label>ADAM10</label>
    </interactant>
    <organismsDiffer>false</organismsDiffer>
    <experiments>3</experiments>
</comment>
<comment type="interaction">
    <interactant intactId="EBI-1348">
        <id>P06239</id>
    </interactant>
    <interactant intactId="EBI-77818">
        <id>Q13444</id>
        <label>ADAM15</label>
    </interactant>
    <organismsDiffer>false</organismsDiffer>
    <experiments>4</experiments>
</comment>
<comment type="interaction">
    <interactant intactId="EBI-1348">
        <id>P06239</id>
    </interactant>
    <interactant intactId="EBI-608057">
        <id>P10275</id>
        <label>AR</label>
    </interactant>
    <organismsDiffer>false</organismsDiffer>
    <experiments>7</experiments>
</comment>
<comment type="interaction">
    <interactant intactId="EBI-1348">
        <id>P06239</id>
    </interactant>
    <interactant intactId="EBI-958997">
        <id>P20749</id>
        <label>BCL3</label>
    </interactant>
    <organismsDiffer>false</organismsDiffer>
    <experiments>3</experiments>
</comment>
<comment type="interaction">
    <interactant intactId="EBI-1348">
        <id>P06239</id>
    </interactant>
    <interactant intactId="EBI-353826">
        <id>P01730</id>
        <label>CD4</label>
    </interactant>
    <organismsDiffer>false</organismsDiffer>
    <experiments>2</experiments>
</comment>
<comment type="interaction">
    <interactant intactId="EBI-1348">
        <id>P06239</id>
    </interactant>
    <interactant intactId="EBI-10194801">
        <id>Q5VV42</id>
        <label>CDKAL1</label>
    </interactant>
    <organismsDiffer>false</organismsDiffer>
    <experiments>3</experiments>
</comment>
<comment type="interaction">
    <interactant intactId="EBI-1348">
        <id>P06239</id>
    </interactant>
    <interactant intactId="EBI-3946257">
        <id>P36888</id>
        <label>FLT3</label>
    </interactant>
    <organismsDiffer>false</organismsDiffer>
    <experiments>2</experiments>
</comment>
<comment type="interaction">
    <interactant intactId="EBI-1348">
        <id>P06239</id>
    </interactant>
    <interactant intactId="EBI-517684">
        <id>Q13480</id>
        <label>GAB1</label>
    </interactant>
    <organismsDiffer>false</organismsDiffer>
    <experiments>10</experiments>
</comment>
<comment type="interaction">
    <interactant intactId="EBI-1348">
        <id>P06239</id>
    </interactant>
    <interactant intactId="EBI-6664760">
        <id>P23771</id>
        <label>GATA3</label>
    </interactant>
    <organismsDiffer>false</organismsDiffer>
    <experiments>3</experiments>
</comment>
<comment type="interaction">
    <interactant intactId="EBI-1348">
        <id>P06239</id>
    </interactant>
    <interactant intactId="EBI-296047">
        <id>P07900</id>
        <label>HSP90AA1</label>
    </interactant>
    <organismsDiffer>false</organismsDiffer>
    <experiments>3</experiments>
</comment>
<comment type="interaction">
    <interactant intactId="EBI-1348">
        <id>P06239</id>
    </interactant>
    <interactant intactId="EBI-352572">
        <id>P08238</id>
        <label>HSP90AB1</label>
    </interactant>
    <organismsDiffer>false</organismsDiffer>
    <experiments>4</experiments>
</comment>
<comment type="interaction">
    <interactant intactId="EBI-1348">
        <id>P06239</id>
    </interactant>
    <interactant intactId="EBI-1364">
        <id>Q07666</id>
        <label>KHDRBS1</label>
    </interactant>
    <organismsDiffer>false</organismsDiffer>
    <experiments>5</experiments>
</comment>
<comment type="interaction">
    <interactant intactId="EBI-1348">
        <id>P06239</id>
    </interactant>
    <interactant intactId="EBI-1379503">
        <id>P10721</id>
        <label>KIT</label>
    </interactant>
    <organismsDiffer>false</organismsDiffer>
    <experiments>8</experiments>
</comment>
<comment type="interaction">
    <interactant intactId="EBI-1348">
        <id>P06239</id>
    </interactant>
    <interactant intactId="EBI-1222766">
        <id>O43561</id>
        <label>LAT</label>
    </interactant>
    <organismsDiffer>false</organismsDiffer>
    <experiments>2</experiments>
</comment>
<comment type="interaction">
    <interactant intactId="EBI-1348">
        <id>P06239</id>
    </interactant>
    <interactant intactId="EBI-1348">
        <id>P06239</id>
        <label>LCK</label>
    </interactant>
    <organismsDiffer>false</organismsDiffer>
    <experiments>5</experiments>
</comment>
<comment type="interaction">
    <interactant intactId="EBI-1348">
        <id>P06239</id>
    </interactant>
    <interactant intactId="EBI-741037">
        <id>Q9BRK4</id>
        <label>LZTS2</label>
    </interactant>
    <organismsDiffer>false</organismsDiffer>
    <experiments>3</experiments>
</comment>
<comment type="interaction">
    <interactant intactId="EBI-1348">
        <id>P06239</id>
    </interactant>
    <interactant intactId="EBI-514199">
        <id>Q9H204</id>
        <label>MED28</label>
    </interactant>
    <organismsDiffer>false</organismsDiffer>
    <experiments>4</experiments>
</comment>
<comment type="interaction">
    <interactant intactId="EBI-1348">
        <id>P06239</id>
    </interactant>
    <interactant intactId="EBI-1039152">
        <id>P08581</id>
        <label>MET</label>
    </interactant>
    <organismsDiffer>false</organismsDiffer>
    <experiments>3</experiments>
</comment>
<comment type="interaction">
    <interactant intactId="EBI-1348">
        <id>P06239</id>
    </interactant>
    <interactant intactId="EBI-493507">
        <id>P04150</id>
        <label>NR3C1</label>
    </interactant>
    <organismsDiffer>false</organismsDiffer>
    <experiments>3</experiments>
</comment>
<comment type="interaction">
    <interactant intactId="EBI-1348">
        <id>P06239</id>
    </interactant>
    <interactant intactId="EBI-374762">
        <id>Q04759</id>
        <label>PRKCQ</label>
    </interactant>
    <organismsDiffer>false</organismsDiffer>
    <experiments>2</experiments>
</comment>
<comment type="interaction">
    <interactant intactId="EBI-1348">
        <id>P06239</id>
    </interactant>
    <interactant intactId="EBI-1211241">
        <id>Q9Y2R2</id>
        <label>PTPN22</label>
    </interactant>
    <organismsDiffer>false</organismsDiffer>
    <experiments>6</experiments>
</comment>
<comment type="interaction">
    <interactant intactId="EBI-1348">
        <id>P06239</id>
    </interactant>
    <interactant intactId="EBI-78260">
        <id>P29350</id>
        <label>PTPN6</label>
    </interactant>
    <organismsDiffer>false</organismsDiffer>
    <experiments>5</experiments>
</comment>
<comment type="interaction">
    <interactant intactId="EBI-1348">
        <id>P06239</id>
    </interactant>
    <interactant intactId="EBI-1341">
        <id>P08575</id>
        <label>PTPRC</label>
    </interactant>
    <organismsDiffer>false</organismsDiffer>
    <experiments>7</experiments>
</comment>
<comment type="interaction">
    <interactant intactId="EBI-1348">
        <id>P06239</id>
    </interactant>
    <interactant intactId="EBI-490630">
        <id>Q9NP31</id>
        <label>SH2D2A</label>
    </interactant>
    <organismsDiffer>false</organismsDiffer>
    <experiments>12</experiments>
</comment>
<comment type="interaction">
    <interactant intactId="EBI-1348">
        <id>P06239</id>
    </interactant>
    <interactant intactId="EBI-78302">
        <id>P43405</id>
        <label>SYK</label>
    </interactant>
    <organismsDiffer>false</organismsDiffer>
    <experiments>7</experiments>
</comment>
<comment type="interaction">
    <interactant intactId="EBI-1348">
        <id>P06239</id>
    </interactant>
    <interactant intactId="EBI-15102259">
        <id>Q8N1K5-1</id>
        <label>THEMIS</label>
    </interactant>
    <organismsDiffer>false</organismsDiffer>
    <experiments>3</experiments>
</comment>
<comment type="interaction">
    <interactant intactId="EBI-1348">
        <id>P06239</id>
    </interactant>
    <interactant intactId="EBI-3390054">
        <id>P0CG48</id>
        <label>UBC</label>
    </interactant>
    <organismsDiffer>false</organismsDiffer>
    <experiments>2</experiments>
</comment>
<comment type="interaction">
    <interactant intactId="EBI-1348">
        <id>P06239</id>
    </interactant>
    <interactant intactId="EBI-356498">
        <id>P62258</id>
        <label>YWHAE</label>
    </interactant>
    <organismsDiffer>false</organismsDiffer>
    <experiments>2</experiments>
</comment>
<comment type="interaction">
    <interactant intactId="EBI-1348">
        <id>P06239</id>
    </interactant>
    <interactant intactId="EBI-1211276">
        <id>P43403</id>
        <label>ZAP70</label>
    </interactant>
    <organismsDiffer>false</organismsDiffer>
    <experiments>2</experiments>
</comment>
<comment type="interaction">
    <interactant intactId="EBI-1348">
        <id>P06239</id>
    </interactant>
    <interactant intactId="EBI-866709">
        <id>P22575</id>
    </interactant>
    <organismsDiffer>true</organismsDiffer>
    <experiments>7</experiments>
</comment>
<comment type="interaction">
    <interactant intactId="EBI-1348">
        <id>P06239</id>
    </interactant>
    <interactant intactId="EBI-7709835">
        <id>Q9YJQ8</id>
    </interactant>
    <organismsDiffer>true</organismsDiffer>
    <experiments>2</experiments>
</comment>
<comment type="interaction">
    <interactant intactId="EBI-13287659">
        <id>P06239-3</id>
    </interactant>
    <interactant intactId="EBI-745641">
        <id>Q96DX5</id>
        <label>ASB9</label>
    </interactant>
    <organismsDiffer>false</organismsDiffer>
    <experiments>3</experiments>
</comment>
<comment type="interaction">
    <interactant intactId="EBI-13287659">
        <id>P06239-3</id>
    </interactant>
    <interactant intactId="EBI-2817707">
        <id>Q9BXJ5</id>
        <label>C1QTNF2</label>
    </interactant>
    <organismsDiffer>false</organismsDiffer>
    <experiments>3</experiments>
</comment>
<comment type="interaction">
    <interactant intactId="EBI-13287659">
        <id>P06239-3</id>
    </interactant>
    <interactant intactId="EBI-12160437">
        <id>A8MTA8-2</id>
        <label>CIMIP2B</label>
    </interactant>
    <organismsDiffer>false</organismsDiffer>
    <experiments>3</experiments>
</comment>
<comment type="interaction">
    <interactant intactId="EBI-13287659">
        <id>P06239-3</id>
    </interactant>
    <interactant intactId="EBI-751587">
        <id>Q9GZU7</id>
        <label>CTDSP1</label>
    </interactant>
    <organismsDiffer>false</organismsDiffer>
    <experiments>3</experiments>
</comment>
<comment type="interaction">
    <interactant intactId="EBI-13287659">
        <id>P06239-3</id>
    </interactant>
    <interactant intactId="EBI-10271199">
        <id>Q8NI38</id>
        <label>NFKBID</label>
    </interactant>
    <organismsDiffer>false</organismsDiffer>
    <experiments>3</experiments>
</comment>
<comment type="interaction">
    <interactant intactId="EBI-13287659">
        <id>P06239-3</id>
    </interactant>
    <interactant intactId="EBI-10181089">
        <id>I6L996</id>
        <label>PTK2</label>
    </interactant>
    <organismsDiffer>false</organismsDiffer>
    <experiments>3</experiments>
</comment>
<comment type="interaction">
    <interactant intactId="EBI-13287659">
        <id>P06239-3</id>
    </interactant>
    <interactant intactId="EBI-18560266">
        <id>Q92753-1</id>
        <label>RORB</label>
    </interactant>
    <organismsDiffer>false</organismsDiffer>
    <experiments>3</experiments>
</comment>
<comment type="interaction">
    <interactant intactId="EBI-13287659">
        <id>P06239-3</id>
    </interactant>
    <interactant intactId="EBI-17716262">
        <id>Q9UPQ4-2</id>
        <label>TRIM35</label>
    </interactant>
    <organismsDiffer>false</organismsDiffer>
    <experiments>3</experiments>
</comment>
<comment type="interaction">
    <interactant intactId="EBI-13287659">
        <id>P06239-3</id>
    </interactant>
    <interactant intactId="EBI-2514383">
        <id>Q5T6F2</id>
        <label>UBAP2</label>
    </interactant>
    <organismsDiffer>false</organismsDiffer>
    <experiments>3</experiments>
</comment>
<comment type="subcellular location">
    <subcellularLocation>
        <location evidence="10 25">Cell membrane</location>
        <topology evidence="10 25">Lipid-anchor</topology>
        <orientation evidence="10 25">Cytoplasmic side</orientation>
    </subcellularLocation>
    <subcellularLocation>
        <location evidence="10 25">Cytoplasm</location>
        <location evidence="10 25">Cytosol</location>
    </subcellularLocation>
    <text evidence="10">Present in lipid rafts in an inactive form.</text>
</comment>
<comment type="alternative products">
    <event type="alternative splicing"/>
    <isoform>
        <id>P06239-1</id>
        <name>Long</name>
        <sequence type="displayed"/>
    </isoform>
    <isoform>
        <id>P06239-2</id>
        <name>Short</name>
        <sequence type="described" ref="VSP_005000 VSP_005001"/>
    </isoform>
    <isoform>
        <id>P06239-3</id>
        <name>3</name>
        <sequence type="described" ref="VSP_016049"/>
    </isoform>
</comment>
<comment type="tissue specificity">
    <text>Expressed specifically in lymphoid cells.</text>
</comment>
<comment type="domain">
    <text>The SH2 domain mediates interaction with SQSTM1. Interaction is regulated by Ser-59 phosphorylation.</text>
</comment>
<comment type="PTM">
    <text evidence="16 26 29 31 35 37">Autophosphorylated on Tyr-394, increasing enzymatic activity, this site is dephosphorylated by PTN22. Phosphorylated on Tyr-505 by CSK, decreasing activity. Dephosphorylated by PTPRC/CD45. Dephosphorylation at Tyr-394 by PTPN2 negatively regulates T-cell receptor signaling. Dephosphorylation at Tyr-394 by DUSP22 negatively regulates T-cell receptor signaling (PubMed:24714587, PubMed:38225265).</text>
</comment>
<comment type="PTM">
    <text evidence="1">Myristoylation is required prior to palmitoylation.</text>
</comment>
<comment type="PTM">
    <text evidence="25">Palmitoylation regulates association with the plasma membrane and could be mediated by ZDHHC2.</text>
</comment>
<comment type="PTM">
    <text evidence="31">'Lys-63'-linked ubiquitinated at Lys-99 and Lys-276 by UBR2; this modification is required for autophosphorylation at Tyr-394.</text>
</comment>
<comment type="mass spectrometry" mass="57869.42" method="MALDI" evidence="7"/>
<comment type="disease">
    <text>A chromosomal aberration involving LCK is found in leukemias. Translocation t(1;7)(p34;q34) with TCRB.</text>
</comment>
<comment type="disease" evidence="27">
    <disease id="DI-04079">
        <name>Immunodeficiency 22</name>
        <acronym>IMD22</acronym>
        <description>A primary immunodeficiency characterized by T-cell dysfunction. Affected individuals present with lymphopenia, recurrent infections, severe diarrhea, and failure to thrive.</description>
        <dbReference type="MIM" id="615758"/>
    </disease>
    <text>The disease is caused by variants affecting the gene represented in this entry.</text>
</comment>
<comment type="similarity">
    <text evidence="3">Belongs to the protein kinase superfamily. Tyr protein kinase family. SRC subfamily.</text>
</comment>
<comment type="online information" name="Atlas of Genetics and Cytogenetics in Oncology and Haematology">
    <link uri="https://atlasgeneticsoncology.org/gene/14/LCK"/>
</comment>
<comment type="online information" name="Wikipedia">
    <link uri="https://en.wikipedia.org/wiki/Lck"/>
    <text>Lck entry</text>
</comment>
<organism>
    <name type="scientific">Homo sapiens</name>
    <name type="common">Human</name>
    <dbReference type="NCBI Taxonomy" id="9606"/>
    <lineage>
        <taxon>Eukaryota</taxon>
        <taxon>Metazoa</taxon>
        <taxon>Chordata</taxon>
        <taxon>Craniata</taxon>
        <taxon>Vertebrata</taxon>
        <taxon>Euteleostomi</taxon>
        <taxon>Mammalia</taxon>
        <taxon>Eutheria</taxon>
        <taxon>Euarchontoglires</taxon>
        <taxon>Primates</taxon>
        <taxon>Haplorrhini</taxon>
        <taxon>Catarrhini</taxon>
        <taxon>Hominidae</taxon>
        <taxon>Homo</taxon>
    </lineage>
</organism>
<dbReference type="EC" id="2.7.10.2"/>
<dbReference type="EMBL" id="X05027">
    <property type="protein sequence ID" value="CAA28691.1"/>
    <property type="molecule type" value="mRNA"/>
</dbReference>
<dbReference type="EMBL" id="X13529">
    <property type="protein sequence ID" value="CAA31884.1"/>
    <property type="molecule type" value="mRNA"/>
</dbReference>
<dbReference type="EMBL" id="M36881">
    <property type="protein sequence ID" value="AAA59502.1"/>
    <property type="molecule type" value="mRNA"/>
</dbReference>
<dbReference type="EMBL" id="X14055">
    <property type="protein sequence ID" value="CAA32211.1"/>
    <property type="molecule type" value="Genomic_DNA"/>
</dbReference>
<dbReference type="EMBL" id="X14053">
    <property type="protein sequence ID" value="CAA32211.1"/>
    <property type="status" value="JOINED"/>
    <property type="molecule type" value="Genomic_DNA"/>
</dbReference>
<dbReference type="EMBL" id="X14054">
    <property type="protein sequence ID" value="CAA32211.1"/>
    <property type="status" value="JOINED"/>
    <property type="molecule type" value="Genomic_DNA"/>
</dbReference>
<dbReference type="EMBL" id="U07236">
    <property type="protein sequence ID" value="AAA18225.1"/>
    <property type="molecule type" value="mRNA"/>
</dbReference>
<dbReference type="EMBL" id="U23852">
    <property type="protein sequence ID" value="AAC50287.1"/>
    <property type="molecule type" value="mRNA"/>
</dbReference>
<dbReference type="EMBL" id="BN000073">
    <property type="protein sequence ID" value="CAD55807.1"/>
    <property type="molecule type" value="Genomic_DNA"/>
</dbReference>
<dbReference type="EMBL" id="AL121991">
    <property type="status" value="NOT_ANNOTATED_CDS"/>
    <property type="molecule type" value="Genomic_DNA"/>
</dbReference>
<dbReference type="EMBL" id="CH471059">
    <property type="protein sequence ID" value="EAX07543.1"/>
    <property type="molecule type" value="Genomic_DNA"/>
</dbReference>
<dbReference type="EMBL" id="CH471059">
    <property type="protein sequence ID" value="EAX07546.1"/>
    <property type="molecule type" value="Genomic_DNA"/>
</dbReference>
<dbReference type="EMBL" id="BC013200">
    <property type="protein sequence ID" value="AAH13200.1"/>
    <property type="molecule type" value="mRNA"/>
</dbReference>
<dbReference type="EMBL" id="M21510">
    <property type="protein sequence ID" value="AAA59501.1"/>
    <property type="status" value="ALT_TERM"/>
    <property type="molecule type" value="Genomic_DNA"/>
</dbReference>
<dbReference type="EMBL" id="M26692">
    <property type="protein sequence ID" value="AAA59503.1"/>
    <property type="molecule type" value="Genomic_DNA"/>
</dbReference>
<dbReference type="EMBL" id="AF228313">
    <property type="protein sequence ID" value="AAF34794.1"/>
    <property type="molecule type" value="mRNA"/>
</dbReference>
<dbReference type="EMBL" id="X06369">
    <property type="protein sequence ID" value="CAA29667.1"/>
    <property type="molecule type" value="mRNA"/>
</dbReference>
<dbReference type="EMBL" id="X04476">
    <property type="protein sequence ID" value="CAA28165.1"/>
    <property type="molecule type" value="mRNA"/>
</dbReference>
<dbReference type="CCDS" id="CCDS359.1">
    <molecule id="P06239-1"/>
</dbReference>
<dbReference type="PIR" id="JQ0152">
    <property type="entry name" value="OKHULK"/>
</dbReference>
<dbReference type="RefSeq" id="NP_001036236.1">
    <molecule id="P06239-1"/>
    <property type="nucleotide sequence ID" value="NM_001042771.3"/>
</dbReference>
<dbReference type="RefSeq" id="NP_005347.3">
    <molecule id="P06239-1"/>
    <property type="nucleotide sequence ID" value="NM_005356.4"/>
</dbReference>
<dbReference type="PDB" id="1BHF">
    <property type="method" value="X-ray"/>
    <property type="resolution" value="1.80 A"/>
    <property type="chains" value="A=119-226"/>
</dbReference>
<dbReference type="PDB" id="1BHH">
    <property type="method" value="X-ray"/>
    <property type="resolution" value="1.90 A"/>
    <property type="chains" value="A=119-226, B=124-226"/>
</dbReference>
<dbReference type="PDB" id="1CWD">
    <property type="method" value="X-ray"/>
    <property type="resolution" value="2.25 A"/>
    <property type="chains" value="L=127-222"/>
</dbReference>
<dbReference type="PDB" id="1CWE">
    <property type="method" value="X-ray"/>
    <property type="resolution" value="2.30 A"/>
    <property type="chains" value="A/C=127-222"/>
</dbReference>
<dbReference type="PDB" id="1FBZ">
    <property type="method" value="X-ray"/>
    <property type="resolution" value="2.40 A"/>
    <property type="chains" value="A/B=123-226"/>
</dbReference>
<dbReference type="PDB" id="1H92">
    <property type="method" value="NMR"/>
    <property type="chains" value="A=59-120"/>
</dbReference>
<dbReference type="PDB" id="1IJR">
    <property type="method" value="X-ray"/>
    <property type="resolution" value="2.20 A"/>
    <property type="chains" value="A=124-226"/>
</dbReference>
<dbReference type="PDB" id="1KIK">
    <property type="method" value="NMR"/>
    <property type="chains" value="A=64-120"/>
</dbReference>
<dbReference type="PDB" id="1LCJ">
    <property type="method" value="X-ray"/>
    <property type="resolution" value="1.80 A"/>
    <property type="chains" value="A=119-226"/>
</dbReference>
<dbReference type="PDB" id="1LCK">
    <property type="method" value="X-ray"/>
    <property type="resolution" value="2.50 A"/>
    <property type="chains" value="A=53-226, B=502-509"/>
</dbReference>
<dbReference type="PDB" id="1LKK">
    <property type="method" value="X-ray"/>
    <property type="resolution" value="1.00 A"/>
    <property type="chains" value="A=122-226"/>
</dbReference>
<dbReference type="PDB" id="1LKL">
    <property type="method" value="X-ray"/>
    <property type="resolution" value="1.80 A"/>
    <property type="chains" value="A=123-226"/>
</dbReference>
<dbReference type="PDB" id="1Q68">
    <property type="method" value="NMR"/>
    <property type="chains" value="B=7-35"/>
</dbReference>
<dbReference type="PDB" id="1Q69">
    <property type="method" value="NMR"/>
    <property type="chains" value="B=7-35"/>
</dbReference>
<dbReference type="PDB" id="1QPC">
    <property type="method" value="X-ray"/>
    <property type="resolution" value="1.60 A"/>
    <property type="chains" value="A=231-509"/>
</dbReference>
<dbReference type="PDB" id="1QPD">
    <property type="method" value="X-ray"/>
    <property type="resolution" value="2.00 A"/>
    <property type="chains" value="A=231-509"/>
</dbReference>
<dbReference type="PDB" id="1QPE">
    <property type="method" value="X-ray"/>
    <property type="resolution" value="2.00 A"/>
    <property type="chains" value="A=231-509"/>
</dbReference>
<dbReference type="PDB" id="1QPJ">
    <property type="method" value="X-ray"/>
    <property type="resolution" value="2.20 A"/>
    <property type="chains" value="A=231-509"/>
</dbReference>
<dbReference type="PDB" id="1X27">
    <property type="method" value="X-ray"/>
    <property type="resolution" value="2.70 A"/>
    <property type="chains" value="A/B/C/D/E/F=64-226"/>
</dbReference>
<dbReference type="PDB" id="2IIM">
    <property type="method" value="X-ray"/>
    <property type="resolution" value="1.00 A"/>
    <property type="chains" value="A=59-119"/>
</dbReference>
<dbReference type="PDB" id="2OF2">
    <property type="method" value="X-ray"/>
    <property type="resolution" value="2.00 A"/>
    <property type="chains" value="A=231-501"/>
</dbReference>
<dbReference type="PDB" id="2OF4">
    <property type="method" value="X-ray"/>
    <property type="resolution" value="2.70 A"/>
    <property type="chains" value="A=231-501"/>
</dbReference>
<dbReference type="PDB" id="2OFU">
    <property type="method" value="X-ray"/>
    <property type="resolution" value="2.00 A"/>
    <property type="chains" value="A=229-501"/>
</dbReference>
<dbReference type="PDB" id="2OFV">
    <property type="method" value="X-ray"/>
    <property type="resolution" value="2.00 A"/>
    <property type="chains" value="A/B=232-498"/>
</dbReference>
<dbReference type="PDB" id="2OG8">
    <property type="method" value="X-ray"/>
    <property type="resolution" value="2.30 A"/>
    <property type="chains" value="A/B=237-499"/>
</dbReference>
<dbReference type="PDB" id="2PL0">
    <property type="method" value="X-ray"/>
    <property type="resolution" value="2.80 A"/>
    <property type="chains" value="A=225-509"/>
</dbReference>
<dbReference type="PDB" id="2ZM1">
    <property type="method" value="X-ray"/>
    <property type="resolution" value="2.10 A"/>
    <property type="chains" value="A=225-509"/>
</dbReference>
<dbReference type="PDB" id="2ZM4">
    <property type="method" value="X-ray"/>
    <property type="resolution" value="2.70 A"/>
    <property type="chains" value="A=225-509"/>
</dbReference>
<dbReference type="PDB" id="2ZYB">
    <property type="method" value="X-ray"/>
    <property type="resolution" value="2.55 A"/>
    <property type="chains" value="A=225-509"/>
</dbReference>
<dbReference type="PDB" id="3AC1">
    <property type="method" value="X-ray"/>
    <property type="resolution" value="1.99 A"/>
    <property type="chains" value="A=225-509"/>
</dbReference>
<dbReference type="PDB" id="3AC2">
    <property type="method" value="X-ray"/>
    <property type="resolution" value="2.10 A"/>
    <property type="chains" value="A=225-509"/>
</dbReference>
<dbReference type="PDB" id="3AC3">
    <property type="method" value="X-ray"/>
    <property type="resolution" value="2.55 A"/>
    <property type="chains" value="A=225-509"/>
</dbReference>
<dbReference type="PDB" id="3AC4">
    <property type="method" value="X-ray"/>
    <property type="resolution" value="2.70 A"/>
    <property type="chains" value="A=225-509"/>
</dbReference>
<dbReference type="PDB" id="3AC5">
    <property type="method" value="X-ray"/>
    <property type="resolution" value="2.50 A"/>
    <property type="chains" value="A=225-509"/>
</dbReference>
<dbReference type="PDB" id="3AC8">
    <property type="method" value="X-ray"/>
    <property type="resolution" value="2.30 A"/>
    <property type="chains" value="A=225-509"/>
</dbReference>
<dbReference type="PDB" id="3ACJ">
    <property type="method" value="X-ray"/>
    <property type="resolution" value="2.20 A"/>
    <property type="chains" value="A=225-509"/>
</dbReference>
<dbReference type="PDB" id="3ACK">
    <property type="method" value="X-ray"/>
    <property type="resolution" value="2.60 A"/>
    <property type="chains" value="A=225-509"/>
</dbReference>
<dbReference type="PDB" id="3AD4">
    <property type="method" value="X-ray"/>
    <property type="resolution" value="2.20 A"/>
    <property type="chains" value="A=225-509"/>
</dbReference>
<dbReference type="PDB" id="3AD5">
    <property type="method" value="X-ray"/>
    <property type="resolution" value="2.00 A"/>
    <property type="chains" value="A=225-509"/>
</dbReference>
<dbReference type="PDB" id="3AD6">
    <property type="method" value="X-ray"/>
    <property type="resolution" value="2.15 A"/>
    <property type="chains" value="A=225-509"/>
</dbReference>
<dbReference type="PDB" id="3B2W">
    <property type="method" value="X-ray"/>
    <property type="resolution" value="2.30 A"/>
    <property type="chains" value="A=226-502"/>
</dbReference>
<dbReference type="PDB" id="3BRH">
    <property type="method" value="X-ray"/>
    <property type="resolution" value="2.20 A"/>
    <property type="chains" value="C/D=391-397"/>
</dbReference>
<dbReference type="PDB" id="3BYM">
    <property type="method" value="X-ray"/>
    <property type="resolution" value="2.00 A"/>
    <property type="chains" value="A=230-501"/>
</dbReference>
<dbReference type="PDB" id="3BYO">
    <property type="method" value="X-ray"/>
    <property type="resolution" value="2.00 A"/>
    <property type="chains" value="A=231-501"/>
</dbReference>
<dbReference type="PDB" id="3BYS">
    <property type="method" value="X-ray"/>
    <property type="resolution" value="2.20 A"/>
    <property type="chains" value="A=225-501"/>
</dbReference>
<dbReference type="PDB" id="3BYU">
    <property type="method" value="X-ray"/>
    <property type="resolution" value="2.30 A"/>
    <property type="chains" value="A=225-501"/>
</dbReference>
<dbReference type="PDB" id="3KMM">
    <property type="method" value="X-ray"/>
    <property type="resolution" value="2.80 A"/>
    <property type="chains" value="A=229-509"/>
</dbReference>
<dbReference type="PDB" id="3KXZ">
    <property type="method" value="X-ray"/>
    <property type="resolution" value="2.37 A"/>
    <property type="chains" value="A=225-509"/>
</dbReference>
<dbReference type="PDB" id="3LCK">
    <property type="method" value="X-ray"/>
    <property type="resolution" value="1.70 A"/>
    <property type="chains" value="A=231-501"/>
</dbReference>
<dbReference type="PDB" id="3MPM">
    <property type="method" value="X-ray"/>
    <property type="resolution" value="1.95 A"/>
    <property type="chains" value="A=237-501"/>
</dbReference>
<dbReference type="PDB" id="4C3F">
    <property type="method" value="X-ray"/>
    <property type="resolution" value="1.72 A"/>
    <property type="chains" value="A=237-501"/>
</dbReference>
<dbReference type="PDB" id="4D8K">
    <property type="method" value="X-ray"/>
    <property type="resolution" value="2.36 A"/>
    <property type="chains" value="A=53-226"/>
</dbReference>
<dbReference type="PDB" id="5MTM">
    <property type="method" value="X-ray"/>
    <property type="resolution" value="2.40 A"/>
    <property type="chains" value="A=118-231"/>
</dbReference>
<dbReference type="PDB" id="5MTN">
    <property type="method" value="X-ray"/>
    <property type="resolution" value="2.85 A"/>
    <property type="chains" value="A=118-231"/>
</dbReference>
<dbReference type="PDB" id="6H6A">
    <property type="method" value="X-ray"/>
    <property type="resolution" value="2.00 A"/>
    <property type="chains" value="E/H/K=2-11"/>
</dbReference>
<dbReference type="PDB" id="6PDJ">
    <property type="method" value="X-ray"/>
    <property type="resolution" value="1.81 A"/>
    <property type="chains" value="A=225-509"/>
</dbReference>
<dbReference type="PDB" id="8X2P">
    <property type="method" value="X-ray"/>
    <property type="resolution" value="1.40 A"/>
    <property type="chains" value="A/B=119-226"/>
</dbReference>
<dbReference type="PDBsum" id="1BHF"/>
<dbReference type="PDBsum" id="1BHH"/>
<dbReference type="PDBsum" id="1CWD"/>
<dbReference type="PDBsum" id="1CWE"/>
<dbReference type="PDBsum" id="1FBZ"/>
<dbReference type="PDBsum" id="1H92"/>
<dbReference type="PDBsum" id="1IJR"/>
<dbReference type="PDBsum" id="1KIK"/>
<dbReference type="PDBsum" id="1LCJ"/>
<dbReference type="PDBsum" id="1LCK"/>
<dbReference type="PDBsum" id="1LKK"/>
<dbReference type="PDBsum" id="1LKL"/>
<dbReference type="PDBsum" id="1Q68"/>
<dbReference type="PDBsum" id="1Q69"/>
<dbReference type="PDBsum" id="1QPC"/>
<dbReference type="PDBsum" id="1QPD"/>
<dbReference type="PDBsum" id="1QPE"/>
<dbReference type="PDBsum" id="1QPJ"/>
<dbReference type="PDBsum" id="1X27"/>
<dbReference type="PDBsum" id="2IIM"/>
<dbReference type="PDBsum" id="2OF2"/>
<dbReference type="PDBsum" id="2OF4"/>
<dbReference type="PDBsum" id="2OFU"/>
<dbReference type="PDBsum" id="2OFV"/>
<dbReference type="PDBsum" id="2OG8"/>
<dbReference type="PDBsum" id="2PL0"/>
<dbReference type="PDBsum" id="2ZM1"/>
<dbReference type="PDBsum" id="2ZM4"/>
<dbReference type="PDBsum" id="2ZYB"/>
<dbReference type="PDBsum" id="3AC1"/>
<dbReference type="PDBsum" id="3AC2"/>
<dbReference type="PDBsum" id="3AC3"/>
<dbReference type="PDBsum" id="3AC4"/>
<dbReference type="PDBsum" id="3AC5"/>
<dbReference type="PDBsum" id="3AC8"/>
<dbReference type="PDBsum" id="3ACJ"/>
<dbReference type="PDBsum" id="3ACK"/>
<dbReference type="PDBsum" id="3AD4"/>
<dbReference type="PDBsum" id="3AD5"/>
<dbReference type="PDBsum" id="3AD6"/>
<dbReference type="PDBsum" id="3B2W"/>
<dbReference type="PDBsum" id="3BRH"/>
<dbReference type="PDBsum" id="3BYM"/>
<dbReference type="PDBsum" id="3BYO"/>
<dbReference type="PDBsum" id="3BYS"/>
<dbReference type="PDBsum" id="3BYU"/>
<dbReference type="PDBsum" id="3KMM"/>
<dbReference type="PDBsum" id="3KXZ"/>
<dbReference type="PDBsum" id="3LCK"/>
<dbReference type="PDBsum" id="3MPM"/>
<dbReference type="PDBsum" id="4C3F"/>
<dbReference type="PDBsum" id="4D8K"/>
<dbReference type="PDBsum" id="5MTM"/>
<dbReference type="PDBsum" id="5MTN"/>
<dbReference type="PDBsum" id="6H6A"/>
<dbReference type="PDBsum" id="6PDJ"/>
<dbReference type="PDBsum" id="8X2P"/>
<dbReference type="BMRB" id="P06239"/>
<dbReference type="SMR" id="P06239"/>
<dbReference type="BioGRID" id="110124">
    <property type="interactions" value="418"/>
</dbReference>
<dbReference type="CORUM" id="P06239"/>
<dbReference type="DIP" id="DIP-553N"/>
<dbReference type="ELM" id="P06239"/>
<dbReference type="FunCoup" id="P06239">
    <property type="interactions" value="405"/>
</dbReference>
<dbReference type="IntAct" id="P06239">
    <property type="interactions" value="173"/>
</dbReference>
<dbReference type="MINT" id="P06239"/>
<dbReference type="STRING" id="9606.ENSP00000477713"/>
<dbReference type="BindingDB" id="P06239"/>
<dbReference type="ChEMBL" id="CHEMBL258"/>
<dbReference type="DrugBank" id="DB08039">
    <property type="generic name" value="(3Z)-N,N-DIMETHYL-2-OXO-3-(4,5,6,7-TETRAHYDRO-1H-INDOL-2-YLMETHYLIDENE)-2,3-DIHYDRO-1H-INDOLE-5-SULFONAMIDE"/>
</dbReference>
<dbReference type="DrugBank" id="DB03023">
    <property type="generic name" value="1-Tert-Butyl-3-(4-Chloro-Phenyl)-1h-Pyrazolo[3,4-D]Pyrimidin-4-Ylamine"/>
</dbReference>
<dbReference type="DrugBank" id="DB07146">
    <property type="generic name" value="2,3-DIPHENYL-N-(2-PIPERAZIN-1-YLETHYL)FURO[2,3-B]PYRIDIN-4-AMINE"/>
</dbReference>
<dbReference type="DrugBank" id="DB06925">
    <property type="generic name" value="3-(2-AMINOQUINAZOLIN-6-YL)-4-METHYL-N-[3-(TRIFLUOROMETHYL)PHENYL]BENZAMIDE"/>
</dbReference>
<dbReference type="DrugBank" id="DB07297">
    <property type="generic name" value="5,6-DIPHENYL-N-(2-PIPERAZIN-1-YLETHYL)FURO[2,3-D]PYRIMIDIN-4-AMINE"/>
</dbReference>
<dbReference type="DrugBank" id="DB01830">
    <property type="generic name" value="AP-22408"/>
</dbReference>
<dbReference type="DrugBank" id="DB03777">
    <property type="generic name" value="Bisindolylmaleimide I"/>
</dbReference>
<dbReference type="DrugBank" id="DB12429">
    <property type="generic name" value="CI-1040"/>
</dbReference>
<dbReference type="DrugBank" id="DB01254">
    <property type="generic name" value="Dasatinib"/>
</dbReference>
<dbReference type="DrugBank" id="DB12010">
    <property type="generic name" value="Fostamatinib"/>
</dbReference>
<dbReference type="DrugBank" id="DB17140">
    <property type="generic name" value="JNJ-28312141"/>
</dbReference>
<dbReference type="DrugBank" id="DB16768">
    <property type="generic name" value="Lavendustin A"/>
</dbReference>
<dbReference type="DrugBank" id="DB08056">
    <property type="generic name" value="N-(2,6-dimethylphenyl)-5-phenylimidazo[1,5-a]pyrazin-8-amine"/>
</dbReference>
<dbReference type="DrugBank" id="DB08057">
    <property type="generic name" value="N-(2-chloro-6-methylphenyl)-8-[(3S)-3-methylpiperazin-1-yl]imidazo[1,5-a]quinoxalin-4-amine"/>
</dbReference>
<dbReference type="DrugBank" id="DB08055">
    <property type="generic name" value="N-(2-chlorophenyl)-5-phenylimidazo[1,5-a]pyrazin-8-amine"/>
</dbReference>
<dbReference type="DrugBank" id="DB09079">
    <property type="generic name" value="Nintedanib"/>
</dbReference>
<dbReference type="DrugBank" id="DB08339">
    <property type="generic name" value="PD-166326"/>
</dbReference>
<dbReference type="DrugBank" id="DB17041">
    <property type="generic name" value="PD-173952"/>
</dbReference>
<dbReference type="DrugBank" id="DB02567">
    <property type="generic name" value="PD173955"/>
</dbReference>
<dbReference type="DrugBank" id="DB04395">
    <property type="generic name" value="Phosphoaminophosphonic Acid-Adenylate Ester"/>
</dbReference>
<dbReference type="DrugBank" id="DB08901">
    <property type="generic name" value="Ponatinib"/>
</dbReference>
<dbReference type="DrugBank" id="DB02010">
    <property type="generic name" value="Staurosporine"/>
</dbReference>
<dbReference type="DrugBank" id="DB04462">
    <property type="generic name" value="Tetrabromo-2-Benzotriazole"/>
</dbReference>
<dbReference type="DrugBank" id="DB15035">
    <property type="generic name" value="Zanubrutinib"/>
</dbReference>
<dbReference type="DrugBank" id="DB16656">
    <property type="generic name" value="Zotiraciclib"/>
</dbReference>
<dbReference type="DrugBank" id="DB04003">
    <property type="generic name" value="{4-[(2S)-2-Acetamido-3-({(1S)-1-[3-carbamoyl-4-(cyclohexylmethoxy)phenyl]ethyl}amino)-3-oxopropyl]-2-phosphonophenoxy}acetic acid"/>
</dbReference>
<dbReference type="DrugCentral" id="P06239"/>
<dbReference type="GuidetoPHARMACOLOGY" id="2053"/>
<dbReference type="GlyGen" id="P06239">
    <property type="glycosylation" value="4 sites, 1 O-linked glycan (1 site)"/>
</dbReference>
<dbReference type="iPTMnet" id="P06239"/>
<dbReference type="PhosphoSitePlus" id="P06239"/>
<dbReference type="SwissPalm" id="P06239"/>
<dbReference type="BioMuta" id="LCK"/>
<dbReference type="DMDM" id="125474"/>
<dbReference type="CPTAC" id="CPTAC-1775"/>
<dbReference type="CPTAC" id="CPTAC-929"/>
<dbReference type="jPOST" id="P06239"/>
<dbReference type="MassIVE" id="P06239"/>
<dbReference type="PaxDb" id="9606-ENSP00000337825"/>
<dbReference type="PeptideAtlas" id="P06239"/>
<dbReference type="ProteomicsDB" id="51874">
    <molecule id="P06239-1"/>
</dbReference>
<dbReference type="ProteomicsDB" id="51875">
    <molecule id="P06239-2"/>
</dbReference>
<dbReference type="ProteomicsDB" id="51876">
    <molecule id="P06239-3"/>
</dbReference>
<dbReference type="ABCD" id="P06239">
    <property type="antibodies" value="8 sequenced antibodies"/>
</dbReference>
<dbReference type="Antibodypedia" id="735">
    <property type="antibodies" value="1714 antibodies from 46 providers"/>
</dbReference>
<dbReference type="DNASU" id="3932"/>
<dbReference type="Ensembl" id="ENST00000333070.4">
    <molecule id="P06239-3"/>
    <property type="protein sequence ID" value="ENSP00000328213.4"/>
    <property type="gene ID" value="ENSG00000182866.18"/>
</dbReference>
<dbReference type="Ensembl" id="ENST00000336890.10">
    <molecule id="P06239-1"/>
    <property type="protein sequence ID" value="ENSP00000337825.5"/>
    <property type="gene ID" value="ENSG00000182866.18"/>
</dbReference>
<dbReference type="GeneID" id="3932"/>
<dbReference type="KEGG" id="hsa:3932"/>
<dbReference type="MANE-Select" id="ENST00000336890.10">
    <property type="protein sequence ID" value="ENSP00000337825.5"/>
    <property type="RefSeq nucleotide sequence ID" value="NM_005356.5"/>
    <property type="RefSeq protein sequence ID" value="NP_005347.3"/>
</dbReference>
<dbReference type="UCSC" id="uc001bux.3">
    <molecule id="P06239-1"/>
    <property type="organism name" value="human"/>
</dbReference>
<dbReference type="AGR" id="HGNC:6524"/>
<dbReference type="CTD" id="3932"/>
<dbReference type="DisGeNET" id="3932"/>
<dbReference type="GeneCards" id="LCK"/>
<dbReference type="HGNC" id="HGNC:6524">
    <property type="gene designation" value="LCK"/>
</dbReference>
<dbReference type="HPA" id="ENSG00000182866">
    <property type="expression patterns" value="Tissue enriched (lymphoid)"/>
</dbReference>
<dbReference type="MalaCards" id="LCK"/>
<dbReference type="MIM" id="153390">
    <property type="type" value="gene"/>
</dbReference>
<dbReference type="MIM" id="615758">
    <property type="type" value="phenotype"/>
</dbReference>
<dbReference type="neXtProt" id="NX_P06239"/>
<dbReference type="OpenTargets" id="ENSG00000182866"/>
<dbReference type="Orphanet" id="280142">
    <property type="disease" value="Severe combined immunodeficiency due to LCK deficiency"/>
</dbReference>
<dbReference type="PharmGKB" id="PA30307"/>
<dbReference type="VEuPathDB" id="HostDB:ENSG00000182866"/>
<dbReference type="eggNOG" id="KOG0197">
    <property type="taxonomic scope" value="Eukaryota"/>
</dbReference>
<dbReference type="GeneTree" id="ENSGT00940000161163"/>
<dbReference type="HOGENOM" id="CLU_000288_7_2_1"/>
<dbReference type="InParanoid" id="P06239"/>
<dbReference type="OMA" id="CSPMQDK"/>
<dbReference type="OrthoDB" id="4062651at2759"/>
<dbReference type="PAN-GO" id="P06239">
    <property type="GO annotations" value="7 GO annotations based on evolutionary models"/>
</dbReference>
<dbReference type="PhylomeDB" id="P06239"/>
<dbReference type="TreeFam" id="TF351634"/>
<dbReference type="BRENDA" id="2.7.10.2">
    <property type="organism ID" value="2681"/>
</dbReference>
<dbReference type="PathwayCommons" id="P06239"/>
<dbReference type="Reactome" id="R-HSA-114604">
    <property type="pathway name" value="GPVI-mediated activation cascade"/>
</dbReference>
<dbReference type="Reactome" id="R-HSA-1257604">
    <property type="pathway name" value="PIP3 activates AKT signaling"/>
</dbReference>
<dbReference type="Reactome" id="R-HSA-1433557">
    <property type="pathway name" value="Signaling by SCF-KIT"/>
</dbReference>
<dbReference type="Reactome" id="R-HSA-1433559">
    <property type="pathway name" value="Regulation of KIT signaling"/>
</dbReference>
<dbReference type="Reactome" id="R-HSA-164944">
    <property type="pathway name" value="Nef and signal transduction"/>
</dbReference>
<dbReference type="Reactome" id="R-HSA-167590">
    <property type="pathway name" value="Nef Mediated CD4 Down-regulation"/>
</dbReference>
<dbReference type="Reactome" id="R-HSA-202424">
    <property type="pathway name" value="Downstream TCR signaling"/>
</dbReference>
<dbReference type="Reactome" id="R-HSA-202427">
    <property type="pathway name" value="Phosphorylation of CD3 and TCR zeta chains"/>
</dbReference>
<dbReference type="Reactome" id="R-HSA-202430">
    <property type="pathway name" value="Translocation of ZAP-70 to Immunological synapse"/>
</dbReference>
<dbReference type="Reactome" id="R-HSA-202433">
    <property type="pathway name" value="Generation of second messenger molecules"/>
</dbReference>
<dbReference type="Reactome" id="R-HSA-210990">
    <property type="pathway name" value="PECAM1 interactions"/>
</dbReference>
<dbReference type="Reactome" id="R-HSA-2219530">
    <property type="pathway name" value="Constitutive Signaling by Aberrant PI3K in Cancer"/>
</dbReference>
<dbReference type="Reactome" id="R-HSA-2424491">
    <property type="pathway name" value="DAP12 signaling"/>
</dbReference>
<dbReference type="Reactome" id="R-HSA-389356">
    <property type="pathway name" value="Co-stimulation by CD28"/>
</dbReference>
<dbReference type="Reactome" id="R-HSA-389357">
    <property type="pathway name" value="CD28 dependent PI3K/Akt signaling"/>
</dbReference>
<dbReference type="Reactome" id="R-HSA-389359">
    <property type="pathway name" value="CD28 dependent Vav1 pathway"/>
</dbReference>
<dbReference type="Reactome" id="R-HSA-389513">
    <property type="pathway name" value="Co-inhibition by CTLA4"/>
</dbReference>
<dbReference type="Reactome" id="R-HSA-389948">
    <property type="pathway name" value="Co-inhibition by PD-1"/>
</dbReference>
<dbReference type="Reactome" id="R-HSA-6811558">
    <property type="pathway name" value="PI5P, PP2A and IER3 Regulate PI3K/AKT Signaling"/>
</dbReference>
<dbReference type="Reactome" id="R-HSA-9013407">
    <property type="pathway name" value="RHOH GTPase cycle"/>
</dbReference>
<dbReference type="Reactome" id="R-HSA-9020558">
    <property type="pathway name" value="Interleukin-2 signaling"/>
</dbReference>
<dbReference type="Reactome" id="R-HSA-9670439">
    <property type="pathway name" value="Signaling by phosphorylated juxtamembrane, extracellular and kinase domain KIT mutants"/>
</dbReference>
<dbReference type="Reactome" id="R-HSA-9706374">
    <property type="pathway name" value="FLT3 signaling through SRC family kinases"/>
</dbReference>
<dbReference type="SignaLink" id="P06239"/>
<dbReference type="SIGNOR" id="P06239"/>
<dbReference type="BioGRID-ORCS" id="3932">
    <property type="hits" value="24 hits in 1189 CRISPR screens"/>
</dbReference>
<dbReference type="CD-CODE" id="8C2F96ED">
    <property type="entry name" value="Centrosome"/>
</dbReference>
<dbReference type="ChiTaRS" id="LCK">
    <property type="organism name" value="human"/>
</dbReference>
<dbReference type="EvolutionaryTrace" id="P06239"/>
<dbReference type="GeneWiki" id="Lck"/>
<dbReference type="GenomeRNAi" id="3932"/>
<dbReference type="Pharos" id="P06239">
    <property type="development level" value="Tclin"/>
</dbReference>
<dbReference type="PRO" id="PR:P06239"/>
<dbReference type="Proteomes" id="UP000005640">
    <property type="component" value="Chromosome 1"/>
</dbReference>
<dbReference type="RNAct" id="P06239">
    <property type="molecule type" value="protein"/>
</dbReference>
<dbReference type="Bgee" id="ENSG00000182866">
    <property type="expression patterns" value="Expressed in thymus and 143 other cell types or tissues"/>
</dbReference>
<dbReference type="ExpressionAtlas" id="P06239">
    <property type="expression patterns" value="baseline and differential"/>
</dbReference>
<dbReference type="GO" id="GO:0005911">
    <property type="term" value="C:cell-cell junction"/>
    <property type="evidence" value="ECO:0007669"/>
    <property type="project" value="Ensembl"/>
</dbReference>
<dbReference type="GO" id="GO:0005737">
    <property type="term" value="C:cytoplasm"/>
    <property type="evidence" value="ECO:0000314"/>
    <property type="project" value="UniProt"/>
</dbReference>
<dbReference type="GO" id="GO:0005829">
    <property type="term" value="C:cytosol"/>
    <property type="evidence" value="ECO:0000304"/>
    <property type="project" value="Reactome"/>
</dbReference>
<dbReference type="GO" id="GO:0070062">
    <property type="term" value="C:extracellular exosome"/>
    <property type="evidence" value="ECO:0007005"/>
    <property type="project" value="UniProtKB"/>
</dbReference>
<dbReference type="GO" id="GO:0001772">
    <property type="term" value="C:immunological synapse"/>
    <property type="evidence" value="ECO:0000314"/>
    <property type="project" value="MGI"/>
</dbReference>
<dbReference type="GO" id="GO:0045121">
    <property type="term" value="C:membrane raft"/>
    <property type="evidence" value="ECO:0000314"/>
    <property type="project" value="UniProtKB"/>
</dbReference>
<dbReference type="GO" id="GO:0000242">
    <property type="term" value="C:pericentriolar material"/>
    <property type="evidence" value="ECO:0000314"/>
    <property type="project" value="UniProtKB"/>
</dbReference>
<dbReference type="GO" id="GO:0005886">
    <property type="term" value="C:plasma membrane"/>
    <property type="evidence" value="ECO:0000314"/>
    <property type="project" value="BHF-UCL"/>
</dbReference>
<dbReference type="GO" id="GO:0005524">
    <property type="term" value="F:ATP binding"/>
    <property type="evidence" value="ECO:0007669"/>
    <property type="project" value="UniProtKB-KW"/>
</dbReference>
<dbReference type="GO" id="GO:0051117">
    <property type="term" value="F:ATPase binding"/>
    <property type="evidence" value="ECO:0000353"/>
    <property type="project" value="UniProtKB"/>
</dbReference>
<dbReference type="GO" id="GO:0042609">
    <property type="term" value="F:CD4 receptor binding"/>
    <property type="evidence" value="ECO:0000353"/>
    <property type="project" value="UniProtKB"/>
</dbReference>
<dbReference type="GO" id="GO:0042610">
    <property type="term" value="F:CD8 receptor binding"/>
    <property type="evidence" value="ECO:0000353"/>
    <property type="project" value="UniProtKB"/>
</dbReference>
<dbReference type="GO" id="GO:0042802">
    <property type="term" value="F:identical protein binding"/>
    <property type="evidence" value="ECO:0000353"/>
    <property type="project" value="IntAct"/>
</dbReference>
<dbReference type="GO" id="GO:0004715">
    <property type="term" value="F:non-membrane spanning protein tyrosine kinase activity"/>
    <property type="evidence" value="ECO:0000314"/>
    <property type="project" value="ARUK-UCL"/>
</dbReference>
<dbReference type="GO" id="GO:0043548">
    <property type="term" value="F:phosphatidylinositol 3-kinase binding"/>
    <property type="evidence" value="ECO:0000353"/>
    <property type="project" value="UniProtKB"/>
</dbReference>
<dbReference type="GO" id="GO:0016004">
    <property type="term" value="F:phospholipase activator activity"/>
    <property type="evidence" value="ECO:0000314"/>
    <property type="project" value="ARUK-UCL"/>
</dbReference>
<dbReference type="GO" id="GO:0043274">
    <property type="term" value="F:phospholipase binding"/>
    <property type="evidence" value="ECO:0000353"/>
    <property type="project" value="ARUK-UCL"/>
</dbReference>
<dbReference type="GO" id="GO:0001784">
    <property type="term" value="F:phosphotyrosine residue binding"/>
    <property type="evidence" value="ECO:0000353"/>
    <property type="project" value="CAFA"/>
</dbReference>
<dbReference type="GO" id="GO:1990405">
    <property type="term" value="F:protein antigen binding"/>
    <property type="evidence" value="ECO:0007669"/>
    <property type="project" value="Ensembl"/>
</dbReference>
<dbReference type="GO" id="GO:0019901">
    <property type="term" value="F:protein kinase binding"/>
    <property type="evidence" value="ECO:0000353"/>
    <property type="project" value="UniProtKB"/>
</dbReference>
<dbReference type="GO" id="GO:0019903">
    <property type="term" value="F:protein phosphatase binding"/>
    <property type="evidence" value="ECO:0000353"/>
    <property type="project" value="UniProtKB"/>
</dbReference>
<dbReference type="GO" id="GO:0004722">
    <property type="term" value="F:protein serine/threonine phosphatase activity"/>
    <property type="evidence" value="ECO:0000314"/>
    <property type="project" value="UniProtKB"/>
</dbReference>
<dbReference type="GO" id="GO:0004713">
    <property type="term" value="F:protein tyrosine kinase activity"/>
    <property type="evidence" value="ECO:0000314"/>
    <property type="project" value="UniProtKB"/>
</dbReference>
<dbReference type="GO" id="GO:0042169">
    <property type="term" value="F:SH2 domain binding"/>
    <property type="evidence" value="ECO:0000353"/>
    <property type="project" value="UniProtKB"/>
</dbReference>
<dbReference type="GO" id="GO:0005102">
    <property type="term" value="F:signaling receptor binding"/>
    <property type="evidence" value="ECO:0000318"/>
    <property type="project" value="GO_Central"/>
</dbReference>
<dbReference type="GO" id="GO:0042608">
    <property type="term" value="F:T cell receptor binding"/>
    <property type="evidence" value="ECO:0000353"/>
    <property type="project" value="CAFA"/>
</dbReference>
<dbReference type="GO" id="GO:0050853">
    <property type="term" value="P:B cell receptor signaling pathway"/>
    <property type="evidence" value="ECO:0000318"/>
    <property type="project" value="GO_Central"/>
</dbReference>
<dbReference type="GO" id="GO:0160162">
    <property type="term" value="P:CD27 signaling pathway"/>
    <property type="evidence" value="ECO:0000314"/>
    <property type="project" value="UniProt"/>
</dbReference>
<dbReference type="GO" id="GO:0007169">
    <property type="term" value="P:cell surface receptor protein tyrosine kinase signaling pathway"/>
    <property type="evidence" value="ECO:0000318"/>
    <property type="project" value="GO_Central"/>
</dbReference>
<dbReference type="GO" id="GO:0038094">
    <property type="term" value="P:Fc-gamma receptor signaling pathway"/>
    <property type="evidence" value="ECO:0000314"/>
    <property type="project" value="UniProtKB"/>
</dbReference>
<dbReference type="GO" id="GO:0042492">
    <property type="term" value="P:gamma-delta T cell differentiation"/>
    <property type="evidence" value="ECO:0007669"/>
    <property type="project" value="Ensembl"/>
</dbReference>
<dbReference type="GO" id="GO:0030097">
    <property type="term" value="P:hemopoiesis"/>
    <property type="evidence" value="ECO:0000303"/>
    <property type="project" value="UniProtKB"/>
</dbReference>
<dbReference type="GO" id="GO:0035556">
    <property type="term" value="P:intracellular signal transduction"/>
    <property type="evidence" value="ECO:0000314"/>
    <property type="project" value="ARUK-UCL"/>
</dbReference>
<dbReference type="GO" id="GO:0006882">
    <property type="term" value="P:intracellular zinc ion homeostasis"/>
    <property type="evidence" value="ECO:0000270"/>
    <property type="project" value="UniProtKB"/>
</dbReference>
<dbReference type="GO" id="GO:0050900">
    <property type="term" value="P:leukocyte migration"/>
    <property type="evidence" value="ECO:0000304"/>
    <property type="project" value="Reactome"/>
</dbReference>
<dbReference type="GO" id="GO:0038083">
    <property type="term" value="P:peptidyl-tyrosine autophosphorylation"/>
    <property type="evidence" value="ECO:0000314"/>
    <property type="project" value="UniProtKB"/>
</dbReference>
<dbReference type="GO" id="GO:0018108">
    <property type="term" value="P:peptidyl-tyrosine phosphorylation"/>
    <property type="evidence" value="ECO:0000315"/>
    <property type="project" value="CAFA"/>
</dbReference>
<dbReference type="GO" id="GO:0030168">
    <property type="term" value="P:platelet activation"/>
    <property type="evidence" value="ECO:0000304"/>
    <property type="project" value="Reactome"/>
</dbReference>
<dbReference type="GO" id="GO:0045588">
    <property type="term" value="P:positive regulation of gamma-delta T cell differentiation"/>
    <property type="evidence" value="ECO:0007669"/>
    <property type="project" value="Ensembl"/>
</dbReference>
<dbReference type="GO" id="GO:0010628">
    <property type="term" value="P:positive regulation of gene expression"/>
    <property type="evidence" value="ECO:0007669"/>
    <property type="project" value="Ensembl"/>
</dbReference>
<dbReference type="GO" id="GO:0034116">
    <property type="term" value="P:positive regulation of heterotypic cell-cell adhesion"/>
    <property type="evidence" value="ECO:0000315"/>
    <property type="project" value="BHF-UCL"/>
</dbReference>
<dbReference type="GO" id="GO:2001244">
    <property type="term" value="P:positive regulation of intrinsic apoptotic signaling pathway"/>
    <property type="evidence" value="ECO:0000315"/>
    <property type="project" value="UniProtKB"/>
</dbReference>
<dbReference type="GO" id="GO:1903039">
    <property type="term" value="P:positive regulation of leukocyte cell-cell adhesion"/>
    <property type="evidence" value="ECO:0000315"/>
    <property type="project" value="BHF-UCL"/>
</dbReference>
<dbReference type="GO" id="GO:0050870">
    <property type="term" value="P:positive regulation of T cell activation"/>
    <property type="evidence" value="ECO:0000314"/>
    <property type="project" value="UniProtKB"/>
</dbReference>
<dbReference type="GO" id="GO:0050862">
    <property type="term" value="P:positive regulation of T cell receptor signaling pathway"/>
    <property type="evidence" value="ECO:0000303"/>
    <property type="project" value="UniProtKB"/>
</dbReference>
<dbReference type="GO" id="GO:0006468">
    <property type="term" value="P:protein phosphorylation"/>
    <property type="evidence" value="ECO:0000314"/>
    <property type="project" value="UniProtKB"/>
</dbReference>
<dbReference type="GO" id="GO:0051249">
    <property type="term" value="P:regulation of lymphocyte activation"/>
    <property type="evidence" value="ECO:0000303"/>
    <property type="project" value="UniProtKB"/>
</dbReference>
<dbReference type="GO" id="GO:0045589">
    <property type="term" value="P:regulation of regulatory T cell differentiation"/>
    <property type="evidence" value="ECO:0007669"/>
    <property type="project" value="Ensembl"/>
</dbReference>
<dbReference type="GO" id="GO:0051209">
    <property type="term" value="P:release of sequestered calcium ion into cytosol"/>
    <property type="evidence" value="ECO:0000250"/>
    <property type="project" value="UniProtKB"/>
</dbReference>
<dbReference type="GO" id="GO:0009410">
    <property type="term" value="P:response to xenobiotic stimulus"/>
    <property type="evidence" value="ECO:0000314"/>
    <property type="project" value="UniProtKB"/>
</dbReference>
<dbReference type="GO" id="GO:0042110">
    <property type="term" value="P:T cell activation"/>
    <property type="evidence" value="ECO:0000314"/>
    <property type="project" value="UniProt"/>
</dbReference>
<dbReference type="GO" id="GO:0031295">
    <property type="term" value="P:T cell costimulation"/>
    <property type="evidence" value="ECO:0000304"/>
    <property type="project" value="Reactome"/>
</dbReference>
<dbReference type="GO" id="GO:0030217">
    <property type="term" value="P:T cell differentiation"/>
    <property type="evidence" value="ECO:0000315"/>
    <property type="project" value="UniProtKB"/>
</dbReference>
<dbReference type="GO" id="GO:0050852">
    <property type="term" value="P:T cell receptor signaling pathway"/>
    <property type="evidence" value="ECO:0000314"/>
    <property type="project" value="UniProt"/>
</dbReference>
<dbReference type="CDD" id="cd05067">
    <property type="entry name" value="PTKc_Lck_Blk"/>
    <property type="match status" value="1"/>
</dbReference>
<dbReference type="CDD" id="cd10362">
    <property type="entry name" value="SH2_Src_Lck"/>
    <property type="match status" value="1"/>
</dbReference>
<dbReference type="CDD" id="cd12005">
    <property type="entry name" value="SH3_Lck"/>
    <property type="match status" value="1"/>
</dbReference>
<dbReference type="DisProt" id="DP01580"/>
<dbReference type="FunFam" id="1.10.510.10:FF:000553">
    <property type="entry name" value="Tyrosine-protein kinase"/>
    <property type="match status" value="1"/>
</dbReference>
<dbReference type="FunFam" id="2.30.30.40:FF:000152">
    <property type="entry name" value="Tyrosine-protein kinase"/>
    <property type="match status" value="1"/>
</dbReference>
<dbReference type="FunFam" id="3.30.200.20:FF:000036">
    <property type="entry name" value="Tyrosine-protein kinase"/>
    <property type="match status" value="1"/>
</dbReference>
<dbReference type="FunFam" id="3.30.505.10:FF:000077">
    <property type="entry name" value="Tyrosine-protein kinase Lck"/>
    <property type="match status" value="1"/>
</dbReference>
<dbReference type="Gene3D" id="3.30.200.20">
    <property type="entry name" value="Phosphorylase Kinase, domain 1"/>
    <property type="match status" value="1"/>
</dbReference>
<dbReference type="Gene3D" id="3.30.505.10">
    <property type="entry name" value="SH2 domain"/>
    <property type="match status" value="1"/>
</dbReference>
<dbReference type="Gene3D" id="2.30.30.40">
    <property type="entry name" value="SH3 Domains"/>
    <property type="match status" value="1"/>
</dbReference>
<dbReference type="Gene3D" id="1.10.510.10">
    <property type="entry name" value="Transferase(Phosphotransferase) domain 1"/>
    <property type="match status" value="1"/>
</dbReference>
<dbReference type="InterPro" id="IPR011009">
    <property type="entry name" value="Kinase-like_dom_sf"/>
</dbReference>
<dbReference type="InterPro" id="IPR035850">
    <property type="entry name" value="Lck_SH2"/>
</dbReference>
<dbReference type="InterPro" id="IPR035749">
    <property type="entry name" value="Lck_SH3"/>
</dbReference>
<dbReference type="InterPro" id="IPR050198">
    <property type="entry name" value="Non-receptor_tyrosine_kinases"/>
</dbReference>
<dbReference type="InterPro" id="IPR000719">
    <property type="entry name" value="Prot_kinase_dom"/>
</dbReference>
<dbReference type="InterPro" id="IPR017441">
    <property type="entry name" value="Protein_kinase_ATP_BS"/>
</dbReference>
<dbReference type="InterPro" id="IPR001245">
    <property type="entry name" value="Ser-Thr/Tyr_kinase_cat_dom"/>
</dbReference>
<dbReference type="InterPro" id="IPR000980">
    <property type="entry name" value="SH2"/>
</dbReference>
<dbReference type="InterPro" id="IPR036860">
    <property type="entry name" value="SH2_dom_sf"/>
</dbReference>
<dbReference type="InterPro" id="IPR036028">
    <property type="entry name" value="SH3-like_dom_sf"/>
</dbReference>
<dbReference type="InterPro" id="IPR001452">
    <property type="entry name" value="SH3_domain"/>
</dbReference>
<dbReference type="InterPro" id="IPR008266">
    <property type="entry name" value="Tyr_kinase_AS"/>
</dbReference>
<dbReference type="InterPro" id="IPR020635">
    <property type="entry name" value="Tyr_kinase_cat_dom"/>
</dbReference>
<dbReference type="PANTHER" id="PTHR24418">
    <property type="entry name" value="TYROSINE-PROTEIN KINASE"/>
    <property type="match status" value="1"/>
</dbReference>
<dbReference type="Pfam" id="PF07714">
    <property type="entry name" value="PK_Tyr_Ser-Thr"/>
    <property type="match status" value="1"/>
</dbReference>
<dbReference type="Pfam" id="PF00017">
    <property type="entry name" value="SH2"/>
    <property type="match status" value="1"/>
</dbReference>
<dbReference type="Pfam" id="PF00018">
    <property type="entry name" value="SH3_1"/>
    <property type="match status" value="1"/>
</dbReference>
<dbReference type="PRINTS" id="PR00401">
    <property type="entry name" value="SH2DOMAIN"/>
</dbReference>
<dbReference type="PRINTS" id="PR00452">
    <property type="entry name" value="SH3DOMAIN"/>
</dbReference>
<dbReference type="PRINTS" id="PR00109">
    <property type="entry name" value="TYRKINASE"/>
</dbReference>
<dbReference type="SMART" id="SM00252">
    <property type="entry name" value="SH2"/>
    <property type="match status" value="1"/>
</dbReference>
<dbReference type="SMART" id="SM00326">
    <property type="entry name" value="SH3"/>
    <property type="match status" value="1"/>
</dbReference>
<dbReference type="SMART" id="SM00219">
    <property type="entry name" value="TyrKc"/>
    <property type="match status" value="1"/>
</dbReference>
<dbReference type="SUPFAM" id="SSF56112">
    <property type="entry name" value="Protein kinase-like (PK-like)"/>
    <property type="match status" value="1"/>
</dbReference>
<dbReference type="SUPFAM" id="SSF55550">
    <property type="entry name" value="SH2 domain"/>
    <property type="match status" value="1"/>
</dbReference>
<dbReference type="SUPFAM" id="SSF50044">
    <property type="entry name" value="SH3-domain"/>
    <property type="match status" value="1"/>
</dbReference>
<dbReference type="PROSITE" id="PS00107">
    <property type="entry name" value="PROTEIN_KINASE_ATP"/>
    <property type="match status" value="1"/>
</dbReference>
<dbReference type="PROSITE" id="PS50011">
    <property type="entry name" value="PROTEIN_KINASE_DOM"/>
    <property type="match status" value="1"/>
</dbReference>
<dbReference type="PROSITE" id="PS00109">
    <property type="entry name" value="PROTEIN_KINASE_TYR"/>
    <property type="match status" value="1"/>
</dbReference>
<dbReference type="PROSITE" id="PS50001">
    <property type="entry name" value="SH2"/>
    <property type="match status" value="1"/>
</dbReference>
<dbReference type="PROSITE" id="PS50002">
    <property type="entry name" value="SH3"/>
    <property type="match status" value="1"/>
</dbReference>
<gene>
    <name type="primary">LCK</name>
</gene>
<proteinExistence type="evidence at protein level"/>
<evidence type="ECO:0000250" key="1"/>
<evidence type="ECO:0000250" key="2">
    <source>
        <dbReference type="UniProtKB" id="P06240"/>
    </source>
</evidence>
<evidence type="ECO:0000255" key="3">
    <source>
        <dbReference type="PROSITE-ProRule" id="PRU00159"/>
    </source>
</evidence>
<evidence type="ECO:0000255" key="4">
    <source>
        <dbReference type="PROSITE-ProRule" id="PRU00191"/>
    </source>
</evidence>
<evidence type="ECO:0000255" key="5">
    <source>
        <dbReference type="PROSITE-ProRule" id="PRU00192"/>
    </source>
</evidence>
<evidence type="ECO:0000255" key="6">
    <source>
        <dbReference type="PROSITE-ProRule" id="PRU10028"/>
    </source>
</evidence>
<evidence type="ECO:0000269" key="7">
    <source>
    </source>
</evidence>
<evidence type="ECO:0000269" key="8">
    <source>
    </source>
</evidence>
<evidence type="ECO:0000269" key="9">
    <source>
    </source>
</evidence>
<evidence type="ECO:0000269" key="10">
    <source>
    </source>
</evidence>
<evidence type="ECO:0000269" key="11">
    <source>
    </source>
</evidence>
<evidence type="ECO:0000269" key="12">
    <source>
    </source>
</evidence>
<evidence type="ECO:0000269" key="13">
    <source>
    </source>
</evidence>
<evidence type="ECO:0000269" key="14">
    <source>
    </source>
</evidence>
<evidence type="ECO:0000269" key="15">
    <source>
    </source>
</evidence>
<evidence type="ECO:0000269" key="16">
    <source>
    </source>
</evidence>
<evidence type="ECO:0000269" key="17">
    <source>
    </source>
</evidence>
<evidence type="ECO:0000269" key="18">
    <source>
    </source>
</evidence>
<evidence type="ECO:0000269" key="19">
    <source>
    </source>
</evidence>
<evidence type="ECO:0000269" key="20">
    <source>
    </source>
</evidence>
<evidence type="ECO:0000269" key="21">
    <source>
    </source>
</evidence>
<evidence type="ECO:0000269" key="22">
    <source>
    </source>
</evidence>
<evidence type="ECO:0000269" key="23">
    <source>
    </source>
</evidence>
<evidence type="ECO:0000269" key="24">
    <source>
    </source>
</evidence>
<evidence type="ECO:0000269" key="25">
    <source>
    </source>
</evidence>
<evidence type="ECO:0000269" key="26">
    <source>
    </source>
</evidence>
<evidence type="ECO:0000269" key="27">
    <source>
    </source>
</evidence>
<evidence type="ECO:0000269" key="28">
    <source>
    </source>
</evidence>
<evidence type="ECO:0000269" key="29">
    <source>
    </source>
</evidence>
<evidence type="ECO:0000269" key="30">
    <source>
    </source>
</evidence>
<evidence type="ECO:0000269" key="31">
    <source>
    </source>
</evidence>
<evidence type="ECO:0000269" key="32">
    <source>
    </source>
</evidence>
<evidence type="ECO:0000269" key="33">
    <source>
    </source>
</evidence>
<evidence type="ECO:0000269" key="34">
    <source>
    </source>
</evidence>
<evidence type="ECO:0000269" key="35">
    <source>
    </source>
</evidence>
<evidence type="ECO:0000269" key="36">
    <source>
    </source>
</evidence>
<evidence type="ECO:0000269" key="37">
    <source>
    </source>
</evidence>
<evidence type="ECO:0000269" key="38">
    <source>
    </source>
</evidence>
<evidence type="ECO:0000269" key="39">
    <source>
    </source>
</evidence>
<evidence type="ECO:0000303" key="40">
    <source>
    </source>
</evidence>
<evidence type="ECO:0000303" key="41">
    <source>
    </source>
</evidence>
<evidence type="ECO:0000305" key="42"/>
<evidence type="ECO:0007744" key="43">
    <source>
    </source>
</evidence>
<evidence type="ECO:0007744" key="44">
    <source>
    </source>
</evidence>
<evidence type="ECO:0007744" key="45">
    <source>
    </source>
</evidence>
<evidence type="ECO:0007744" key="46">
    <source>
    </source>
</evidence>
<evidence type="ECO:0007744" key="47">
    <source>
    </source>
</evidence>
<evidence type="ECO:0007829" key="48">
    <source>
        <dbReference type="PDB" id="1CWD"/>
    </source>
</evidence>
<evidence type="ECO:0007829" key="49">
    <source>
        <dbReference type="PDB" id="1LCJ"/>
    </source>
</evidence>
<evidence type="ECO:0007829" key="50">
    <source>
        <dbReference type="PDB" id="1LKK"/>
    </source>
</evidence>
<evidence type="ECO:0007829" key="51">
    <source>
        <dbReference type="PDB" id="1Q68"/>
    </source>
</evidence>
<evidence type="ECO:0007829" key="52">
    <source>
        <dbReference type="PDB" id="1Q69"/>
    </source>
</evidence>
<evidence type="ECO:0007829" key="53">
    <source>
        <dbReference type="PDB" id="1QPC"/>
    </source>
</evidence>
<evidence type="ECO:0007829" key="54">
    <source>
        <dbReference type="PDB" id="1QPD"/>
    </source>
</evidence>
<evidence type="ECO:0007829" key="55">
    <source>
        <dbReference type="PDB" id="1QPE"/>
    </source>
</evidence>
<evidence type="ECO:0007829" key="56">
    <source>
        <dbReference type="PDB" id="2IIM"/>
    </source>
</evidence>
<evidence type="ECO:0007829" key="57">
    <source>
        <dbReference type="PDB" id="3B2W"/>
    </source>
</evidence>
<evidence type="ECO:0007829" key="58">
    <source>
        <dbReference type="PDB" id="4C3F"/>
    </source>
</evidence>
<evidence type="ECO:0007829" key="59">
    <source>
        <dbReference type="PDB" id="4D8K"/>
    </source>
</evidence>
<feature type="initiator methionine" description="Removed">
    <location>
        <position position="1"/>
    </location>
</feature>
<feature type="chain" id="PRO_0000088124" description="Tyrosine-protein kinase Lck">
    <location>
        <begin position="2"/>
        <end position="509"/>
    </location>
</feature>
<feature type="domain" description="SH3" evidence="5">
    <location>
        <begin position="61"/>
        <end position="121"/>
    </location>
</feature>
<feature type="domain" description="SH2" evidence="4">
    <location>
        <begin position="127"/>
        <end position="224"/>
    </location>
</feature>
<feature type="domain" description="Protein kinase" evidence="3">
    <location>
        <begin position="245"/>
        <end position="498"/>
    </location>
</feature>
<feature type="region of interest" description="Interactions with CD4 and CD8" evidence="1">
    <location>
        <begin position="2"/>
        <end position="72"/>
    </location>
</feature>
<feature type="region of interest" description="Interaction with PTPRH" evidence="11">
    <location>
        <begin position="154"/>
        <end position="242"/>
    </location>
</feature>
<feature type="active site" description="Proton acceptor" evidence="3 6">
    <location>
        <position position="364"/>
    </location>
</feature>
<feature type="binding site" evidence="3">
    <location>
        <begin position="251"/>
        <end position="259"/>
    </location>
    <ligand>
        <name>ATP</name>
        <dbReference type="ChEBI" id="CHEBI:30616"/>
    </ligand>
</feature>
<feature type="binding site" evidence="3">
    <location>
        <position position="273"/>
    </location>
    <ligand>
        <name>ATP</name>
        <dbReference type="ChEBI" id="CHEBI:30616"/>
    </ligand>
</feature>
<feature type="modified residue" description="Phosphoserine" evidence="46">
    <location>
        <position position="102"/>
    </location>
</feature>
<feature type="modified residue" description="Phosphothreonine" evidence="46">
    <location>
        <position position="159"/>
    </location>
</feature>
<feature type="modified residue" description="Phosphoserine" evidence="46">
    <location>
        <position position="162"/>
    </location>
</feature>
<feature type="modified residue" description="Phosphotyrosine" evidence="2">
    <location>
        <position position="192"/>
    </location>
</feature>
<feature type="modified residue" description="Phosphoserine" evidence="46">
    <location>
        <position position="194"/>
    </location>
</feature>
<feature type="modified residue" description="Phosphotyrosine; by autocatalysis" evidence="35">
    <location>
        <position position="394"/>
    </location>
</feature>
<feature type="modified residue" description="Phosphotyrosine; by CSK" evidence="16 35 37 43 44 45 46 47">
    <location>
        <position position="505"/>
    </location>
</feature>
<feature type="lipid moiety-binding region" description="N-myristoyl glycine" evidence="1">
    <location>
        <position position="2"/>
    </location>
</feature>
<feature type="lipid moiety-binding region" description="S-palmitoyl cysteine" evidence="1">
    <location>
        <position position="3"/>
    </location>
</feature>
<feature type="lipid moiety-binding region" description="S-palmitoyl cysteine" evidence="1">
    <location>
        <position position="5"/>
    </location>
</feature>
<feature type="cross-link" description="Glycyl lysine isopeptide (Lys-Gly) (interchain with G-Cter in ubiquitin)" evidence="31">
    <location>
        <position position="99"/>
    </location>
</feature>
<feature type="cross-link" description="Glycyl lysine isopeptide (Lys-Gly) (interchain with G-Cter in ubiquitin)" evidence="31">
    <location>
        <position position="276"/>
    </location>
</feature>
<feature type="splice variant" id="VSP_016049" description="In isoform 3." evidence="40">
    <original>N</original>
    <variation>NDTLLDSQLEEKGLGASPWGNLGQQLLLLPT</variation>
    <location>
        <position position="321"/>
    </location>
</feature>
<feature type="splice variant" id="VSP_005000" description="In isoform Short." evidence="41">
    <original>IAEGMAFIEERNYIHR</original>
    <variation>VRRLGRGAGQGNRPVT</variation>
    <location>
        <begin position="348"/>
        <end position="363"/>
    </location>
</feature>
<feature type="splice variant" id="VSP_005001" description="In isoform Short." evidence="41">
    <location>
        <begin position="364"/>
        <end position="509"/>
    </location>
</feature>
<feature type="sequence variant" id="VAR_013463" description="Found in leukemia." evidence="35">
    <original>V</original>
    <variation>L</variation>
    <location>
        <position position="28"/>
    </location>
</feature>
<feature type="sequence variant" id="VAR_051697" description="In dbSNP:rs11567841.">
    <original>G</original>
    <variation>S</variation>
    <location>
        <position position="201"/>
    </location>
</feature>
<feature type="sequence variant" id="VAR_013464" description="In leukemia.">
    <original>P</original>
    <variation>PQKP</variation>
    <location>
        <position position="232"/>
    </location>
</feature>
<feature type="sequence variant" id="VAR_071291" description="In IMD22; dbSNP:rs587777335." evidence="27">
    <original>L</original>
    <variation>P</variation>
    <location>
        <position position="341"/>
    </location>
</feature>
<feature type="sequence variant" id="VAR_013465" description="Found in leukemia." evidence="35">
    <original>A</original>
    <variation>V</variation>
    <location>
        <position position="353"/>
    </location>
</feature>
<feature type="sequence variant" id="VAR_013466" description="Found in leukemia; dbSNP:rs371436737." evidence="35">
    <original>P</original>
    <variation>L</variation>
    <location>
        <position position="447"/>
    </location>
</feature>
<feature type="mutagenesis site" description="Allows interaction with SQSTM1." evidence="36">
    <original>S</original>
    <variation>E</variation>
    <location>
        <position position="59"/>
    </location>
</feature>
<feature type="mutagenesis site" description="Abolishes UBR2-mediated 'Lys-63'-linked ubiquitination. Abolishes UBR2-mediated 'Lys-63'-linked ubiquitination and autophosphorylation of Tyr-394; when associated with R-276." evidence="31">
    <original>K</original>
    <variation>R</variation>
    <location>
        <position position="99"/>
    </location>
</feature>
<feature type="mutagenesis site" description="No effect on interaction with SQSTM1." evidence="36">
    <original>R</original>
    <variation>K</variation>
    <location>
        <position position="154"/>
    </location>
</feature>
<feature type="mutagenesis site" description="Abolishes UBR2-mediated 'Lys-63'-linked ubiquitination. Abolishes UBR2-mediated 'Lys-63'-linked ubiquitination and autophosphorylation of Tyr-394; when associated with R-99." evidence="31">
    <original>K</original>
    <variation>R</variation>
    <location>
        <position position="276"/>
    </location>
</feature>
<feature type="mutagenesis site" description="Abolishes autophosphorylation." evidence="31">
    <original>Y</original>
    <variation>F</variation>
    <location>
        <position position="394"/>
    </location>
</feature>
<feature type="sequence conflict" description="In Ref. 2; AAA59502." evidence="42" ref="2">
    <original>P</original>
    <variation>R</variation>
    <location>
        <position position="29"/>
    </location>
</feature>
<feature type="sequence conflict" description="In Ref. 2; AAA59502." evidence="42" ref="2">
    <original>T</original>
    <variation>R</variation>
    <location>
        <position position="35"/>
    </location>
</feature>
<feature type="sequence conflict" description="In Ref. 2; CAA31884/AAA59502." evidence="42" ref="2">
    <original>Q</original>
    <variation>P</variation>
    <location>
        <position position="87"/>
    </location>
</feature>
<feature type="sequence conflict" description="In Ref. 1; CAA28691." evidence="42" ref="1">
    <original>VRHYTN</original>
    <variation>ASAITPI</variation>
    <location>
        <begin position="206"/>
        <end position="211"/>
    </location>
</feature>
<feature type="sequence conflict" description="In Ref. 2; AAA59502." evidence="42" ref="2">
    <original>G</original>
    <variation>A</variation>
    <location>
        <position position="254"/>
    </location>
</feature>
<feature type="sequence conflict" description="In Ref. 1; CAA28691." evidence="42" ref="1">
    <original>EVWMGYYNGH</original>
    <variation>RCGWGTTTGT</variation>
    <location>
        <begin position="258"/>
        <end position="267"/>
    </location>
</feature>
<feature type="sequence conflict" description="In Ref. 1; CAA28691." evidence="42" ref="1">
    <original>PDAFL</original>
    <variation>AGRLP</variation>
    <location>
        <begin position="282"/>
        <end position="286"/>
    </location>
</feature>
<feature type="sequence conflict" description="In Ref. 14; CAA28165." evidence="42" ref="14">
    <original>T</original>
    <variation>A</variation>
    <location>
        <position position="375"/>
    </location>
</feature>
<feature type="sequence conflict" description="In Ref. 13; CAA29667." evidence="42" ref="13">
    <original>L</original>
    <variation>H</variation>
    <location>
        <position position="472"/>
    </location>
</feature>
<feature type="sequence conflict" description="In Ref. 1; CAA28691." evidence="42" ref="1">
    <original>QYQPQP</original>
    <variation>STA</variation>
    <location>
        <begin position="504"/>
        <end position="509"/>
    </location>
</feature>
<feature type="helix" evidence="51">
    <location>
        <begin position="12"/>
        <end position="15"/>
    </location>
</feature>
<feature type="strand" evidence="51">
    <location>
        <begin position="21"/>
        <end position="23"/>
    </location>
</feature>
<feature type="strand" evidence="52">
    <location>
        <begin position="24"/>
        <end position="27"/>
    </location>
</feature>
<feature type="turn" evidence="56">
    <location>
        <begin position="60"/>
        <end position="63"/>
    </location>
</feature>
<feature type="strand" evidence="56">
    <location>
        <begin position="65"/>
        <end position="70"/>
    </location>
</feature>
<feature type="strand" evidence="59">
    <location>
        <begin position="76"/>
        <end position="79"/>
    </location>
</feature>
<feature type="strand" evidence="56">
    <location>
        <begin position="87"/>
        <end position="92"/>
    </location>
</feature>
<feature type="strand" evidence="56">
    <location>
        <begin position="95"/>
        <end position="102"/>
    </location>
</feature>
<feature type="turn" evidence="56">
    <location>
        <begin position="103"/>
        <end position="105"/>
    </location>
</feature>
<feature type="strand" evidence="56">
    <location>
        <begin position="108"/>
        <end position="112"/>
    </location>
</feature>
<feature type="helix" evidence="56">
    <location>
        <begin position="113"/>
        <end position="115"/>
    </location>
</feature>
<feature type="strand" evidence="56">
    <location>
        <begin position="116"/>
        <end position="118"/>
    </location>
</feature>
<feature type="strand" evidence="48">
    <location>
        <begin position="128"/>
        <end position="131"/>
    </location>
</feature>
<feature type="helix" evidence="50">
    <location>
        <begin position="134"/>
        <end position="141"/>
    </location>
</feature>
<feature type="strand" evidence="50">
    <location>
        <begin position="151"/>
        <end position="155"/>
    </location>
</feature>
<feature type="strand" evidence="50">
    <location>
        <begin position="157"/>
        <end position="159"/>
    </location>
</feature>
<feature type="strand" evidence="50">
    <location>
        <begin position="163"/>
        <end position="171"/>
    </location>
</feature>
<feature type="turn" evidence="50">
    <location>
        <begin position="172"/>
        <end position="174"/>
    </location>
</feature>
<feature type="strand" evidence="50">
    <location>
        <begin position="175"/>
        <end position="185"/>
    </location>
</feature>
<feature type="turn" evidence="49">
    <location>
        <begin position="187"/>
        <end position="189"/>
    </location>
</feature>
<feature type="strand" evidence="50">
    <location>
        <begin position="191"/>
        <end position="194"/>
    </location>
</feature>
<feature type="strand" evidence="50">
    <location>
        <begin position="199"/>
        <end position="201"/>
    </location>
</feature>
<feature type="helix" evidence="50">
    <location>
        <begin position="202"/>
        <end position="211"/>
    </location>
</feature>
<feature type="strand" evidence="50">
    <location>
        <begin position="216"/>
        <end position="218"/>
    </location>
</feature>
<feature type="turn" evidence="53">
    <location>
        <begin position="233"/>
        <end position="235"/>
    </location>
</feature>
<feature type="strand" evidence="55">
    <location>
        <begin position="237"/>
        <end position="239"/>
    </location>
</feature>
<feature type="helix" evidence="53">
    <location>
        <begin position="242"/>
        <end position="244"/>
    </location>
</feature>
<feature type="strand" evidence="53">
    <location>
        <begin position="245"/>
        <end position="254"/>
    </location>
</feature>
<feature type="strand" evidence="53">
    <location>
        <begin position="257"/>
        <end position="264"/>
    </location>
</feature>
<feature type="turn" evidence="53">
    <location>
        <begin position="265"/>
        <end position="267"/>
    </location>
</feature>
<feature type="strand" evidence="53">
    <location>
        <begin position="268"/>
        <end position="275"/>
    </location>
</feature>
<feature type="turn" evidence="54">
    <location>
        <begin position="277"/>
        <end position="279"/>
    </location>
</feature>
<feature type="helix" evidence="53">
    <location>
        <begin position="282"/>
        <end position="294"/>
    </location>
</feature>
<feature type="strand" evidence="53">
    <location>
        <begin position="303"/>
        <end position="307"/>
    </location>
</feature>
<feature type="strand" evidence="53">
    <location>
        <begin position="309"/>
        <end position="311"/>
    </location>
</feature>
<feature type="strand" evidence="53">
    <location>
        <begin position="313"/>
        <end position="317"/>
    </location>
</feature>
<feature type="helix" evidence="53">
    <location>
        <begin position="324"/>
        <end position="327"/>
    </location>
</feature>
<feature type="helix" evidence="53">
    <location>
        <begin position="331"/>
        <end position="334"/>
    </location>
</feature>
<feature type="helix" evidence="53">
    <location>
        <begin position="338"/>
        <end position="357"/>
    </location>
</feature>
<feature type="helix" evidence="53">
    <location>
        <begin position="367"/>
        <end position="369"/>
    </location>
</feature>
<feature type="strand" evidence="53">
    <location>
        <begin position="370"/>
        <end position="372"/>
    </location>
</feature>
<feature type="strand" evidence="53">
    <location>
        <begin position="378"/>
        <end position="380"/>
    </location>
</feature>
<feature type="helix" evidence="55">
    <location>
        <begin position="383"/>
        <end position="385"/>
    </location>
</feature>
<feature type="helix" evidence="57">
    <location>
        <begin position="386"/>
        <end position="389"/>
    </location>
</feature>
<feature type="strand" evidence="53">
    <location>
        <begin position="390"/>
        <end position="392"/>
    </location>
</feature>
<feature type="strand" evidence="58">
    <location>
        <begin position="393"/>
        <end position="395"/>
    </location>
</feature>
<feature type="turn" evidence="53">
    <location>
        <begin position="404"/>
        <end position="406"/>
    </location>
</feature>
<feature type="helix" evidence="53">
    <location>
        <begin position="409"/>
        <end position="414"/>
    </location>
</feature>
<feature type="helix" evidence="53">
    <location>
        <begin position="419"/>
        <end position="434"/>
    </location>
</feature>
<feature type="turn" evidence="53">
    <location>
        <begin position="435"/>
        <end position="437"/>
    </location>
</feature>
<feature type="helix" evidence="53">
    <location>
        <begin position="446"/>
        <end position="454"/>
    </location>
</feature>
<feature type="helix" evidence="53">
    <location>
        <begin position="467"/>
        <end position="476"/>
    </location>
</feature>
<feature type="helix" evidence="53">
    <location>
        <begin position="481"/>
        <end position="483"/>
    </location>
</feature>
<feature type="helix" evidence="53">
    <location>
        <begin position="487"/>
        <end position="500"/>
    </location>
</feature>
<name>LCK_HUMAN</name>
<accession>P06239</accession>
<accession>D3DPP8</accession>
<accession>P07100</accession>
<accession>Q12850</accession>
<accession>Q13152</accession>
<accession>Q5TDH8</accession>
<accession>Q5TDH9</accession>
<accession>Q7RTZ3</accession>
<accession>Q96DW4</accession>
<accession>Q9NYT8</accession>
<reference key="1">
    <citation type="journal article" date="1986" name="Eur. J. Immunol.">
        <title>A human T cell-specific cDNA clone (YT16) encodes a protein with extensive homology to a family of protein-tyrosine kinases.</title>
        <authorList>
            <person name="Koga Y."/>
            <person name="Caccia N."/>
            <person name="Toyonaga B."/>
            <person name="Spolski R."/>
            <person name="Yanagi Y."/>
            <person name="Yoshikai Y."/>
            <person name="Mak T.W."/>
        </authorList>
    </citation>
    <scope>NUCLEOTIDE SEQUENCE [MRNA]</scope>
</reference>
<reference key="2">
    <citation type="journal article" date="1988" name="J. Cell. Biochem.">
        <title>Structure and expression of lck transcripts in human lymphoid cells.</title>
        <authorList>
            <person name="Perlmutter R.M."/>
            <person name="Marth J.D."/>
            <person name="Lewis D.B."/>
            <person name="Peet R."/>
            <person name="Ziegler S.F."/>
            <person name="Wilson C.B."/>
        </authorList>
    </citation>
    <scope>NUCLEOTIDE SEQUENCE [MRNA]</scope>
</reference>
<reference key="3">
    <citation type="journal article" date="1989" name="Gene">
        <title>Structure of the human lck gene: differences in genomic organisation within src-related genes affect only N-terminal exons.</title>
        <authorList>
            <person name="Rouer E."/>
            <person name="van Huynh T."/>
            <person name="de Souza S.L."/>
            <person name="Lang M.C."/>
            <person name="Fischer S."/>
            <person name="Benarous R."/>
        </authorList>
    </citation>
    <scope>NUCLEOTIDE SEQUENCE [GENOMIC DNA]</scope>
</reference>
<reference key="4">
    <citation type="journal article" date="1994" name="Mol. Cell. Biol.">
        <title>Oncogenic activation of the Lck protein accompanies translocation of the LCK gene in the human HSB2 T-cell leukemia.</title>
        <authorList>
            <person name="Wright D.D."/>
            <person name="Sefton B.M."/>
            <person name="Kamps M.P."/>
        </authorList>
    </citation>
    <scope>NUCLEOTIDE SEQUENCE [MRNA]</scope>
    <scope>VARIANTS LEU-28; GLN-LYS-PRO-232 INS; VAL-353 AND LEU-447</scope>
    <scope>PHOSPHORYLATION AT TYR-394 AND TYR-505</scope>
    <source>
        <tissue>Leukemia</tissue>
    </source>
</reference>
<reference key="5">
    <citation type="journal article" date="1995" name="Biochim. Biophys. Acta">
        <title>An aberrant lck mRNA in two human T-cell lines.</title>
        <authorList>
            <person name="Vogel L.B."/>
            <person name="Arthur R."/>
            <person name="Fujita D.J."/>
        </authorList>
    </citation>
    <scope>NUCLEOTIDE SEQUENCE [MRNA] (ISOFORM SHORT)</scope>
    <scope>ALTERNATIVE SPLICING</scope>
    <source>
        <tissue>Leukemic T-cell</tissue>
    </source>
</reference>
<reference key="6">
    <citation type="journal article" date="2002" name="Diabetes">
        <title>No association between lck gene polymorphisms and protein level in type 1 diabetes.</title>
        <authorList>
            <person name="Nervi S."/>
            <person name="Nicodeme S."/>
            <person name="Gartioux C."/>
            <person name="Atlan C."/>
            <person name="Lathrop M."/>
            <person name="Reviron D."/>
            <person name="Naquet P."/>
            <person name="Matsuda F."/>
            <person name="Imbert J."/>
            <person name="Vialettes B."/>
        </authorList>
    </citation>
    <scope>NUCLEOTIDE SEQUENCE [GENOMIC DNA]</scope>
</reference>
<reference key="7">
    <citation type="journal article" date="2006" name="Nature">
        <title>The DNA sequence and biological annotation of human chromosome 1.</title>
        <authorList>
            <person name="Gregory S.G."/>
            <person name="Barlow K.F."/>
            <person name="McLay K.E."/>
            <person name="Kaul R."/>
            <person name="Swarbreck D."/>
            <person name="Dunham A."/>
            <person name="Scott C.E."/>
            <person name="Howe K.L."/>
            <person name="Woodfine K."/>
            <person name="Spencer C.C.A."/>
            <person name="Jones M.C."/>
            <person name="Gillson C."/>
            <person name="Searle S."/>
            <person name="Zhou Y."/>
            <person name="Kokocinski F."/>
            <person name="McDonald L."/>
            <person name="Evans R."/>
            <person name="Phillips K."/>
            <person name="Atkinson A."/>
            <person name="Cooper R."/>
            <person name="Jones C."/>
            <person name="Hall R.E."/>
            <person name="Andrews T.D."/>
            <person name="Lloyd C."/>
            <person name="Ainscough R."/>
            <person name="Almeida J.P."/>
            <person name="Ambrose K.D."/>
            <person name="Anderson F."/>
            <person name="Andrew R.W."/>
            <person name="Ashwell R.I.S."/>
            <person name="Aubin K."/>
            <person name="Babbage A.K."/>
            <person name="Bagguley C.L."/>
            <person name="Bailey J."/>
            <person name="Beasley H."/>
            <person name="Bethel G."/>
            <person name="Bird C.P."/>
            <person name="Bray-Allen S."/>
            <person name="Brown J.Y."/>
            <person name="Brown A.J."/>
            <person name="Buckley D."/>
            <person name="Burton J."/>
            <person name="Bye J."/>
            <person name="Carder C."/>
            <person name="Chapman J.C."/>
            <person name="Clark S.Y."/>
            <person name="Clarke G."/>
            <person name="Clee C."/>
            <person name="Cobley V."/>
            <person name="Collier R.E."/>
            <person name="Corby N."/>
            <person name="Coville G.J."/>
            <person name="Davies J."/>
            <person name="Deadman R."/>
            <person name="Dunn M."/>
            <person name="Earthrowl M."/>
            <person name="Ellington A.G."/>
            <person name="Errington H."/>
            <person name="Frankish A."/>
            <person name="Frankland J."/>
            <person name="French L."/>
            <person name="Garner P."/>
            <person name="Garnett J."/>
            <person name="Gay L."/>
            <person name="Ghori M.R.J."/>
            <person name="Gibson R."/>
            <person name="Gilby L.M."/>
            <person name="Gillett W."/>
            <person name="Glithero R.J."/>
            <person name="Grafham D.V."/>
            <person name="Griffiths C."/>
            <person name="Griffiths-Jones S."/>
            <person name="Grocock R."/>
            <person name="Hammond S."/>
            <person name="Harrison E.S.I."/>
            <person name="Hart E."/>
            <person name="Haugen E."/>
            <person name="Heath P.D."/>
            <person name="Holmes S."/>
            <person name="Holt K."/>
            <person name="Howden P.J."/>
            <person name="Hunt A.R."/>
            <person name="Hunt S.E."/>
            <person name="Hunter G."/>
            <person name="Isherwood J."/>
            <person name="James R."/>
            <person name="Johnson C."/>
            <person name="Johnson D."/>
            <person name="Joy A."/>
            <person name="Kay M."/>
            <person name="Kershaw J.K."/>
            <person name="Kibukawa M."/>
            <person name="Kimberley A.M."/>
            <person name="King A."/>
            <person name="Knights A.J."/>
            <person name="Lad H."/>
            <person name="Laird G."/>
            <person name="Lawlor S."/>
            <person name="Leongamornlert D.A."/>
            <person name="Lloyd D.M."/>
            <person name="Loveland J."/>
            <person name="Lovell J."/>
            <person name="Lush M.J."/>
            <person name="Lyne R."/>
            <person name="Martin S."/>
            <person name="Mashreghi-Mohammadi M."/>
            <person name="Matthews L."/>
            <person name="Matthews N.S.W."/>
            <person name="McLaren S."/>
            <person name="Milne S."/>
            <person name="Mistry S."/>
            <person name="Moore M.J.F."/>
            <person name="Nickerson T."/>
            <person name="O'Dell C.N."/>
            <person name="Oliver K."/>
            <person name="Palmeiri A."/>
            <person name="Palmer S.A."/>
            <person name="Parker A."/>
            <person name="Patel D."/>
            <person name="Pearce A.V."/>
            <person name="Peck A.I."/>
            <person name="Pelan S."/>
            <person name="Phelps K."/>
            <person name="Phillimore B.J."/>
            <person name="Plumb R."/>
            <person name="Rajan J."/>
            <person name="Raymond C."/>
            <person name="Rouse G."/>
            <person name="Saenphimmachak C."/>
            <person name="Sehra H.K."/>
            <person name="Sheridan E."/>
            <person name="Shownkeen R."/>
            <person name="Sims S."/>
            <person name="Skuce C.D."/>
            <person name="Smith M."/>
            <person name="Steward C."/>
            <person name="Subramanian S."/>
            <person name="Sycamore N."/>
            <person name="Tracey A."/>
            <person name="Tromans A."/>
            <person name="Van Helmond Z."/>
            <person name="Wall M."/>
            <person name="Wallis J.M."/>
            <person name="White S."/>
            <person name="Whitehead S.L."/>
            <person name="Wilkinson J.E."/>
            <person name="Willey D.L."/>
            <person name="Williams H."/>
            <person name="Wilming L."/>
            <person name="Wray P.W."/>
            <person name="Wu Z."/>
            <person name="Coulson A."/>
            <person name="Vaudin M."/>
            <person name="Sulston J.E."/>
            <person name="Durbin R.M."/>
            <person name="Hubbard T."/>
            <person name="Wooster R."/>
            <person name="Dunham I."/>
            <person name="Carter N.P."/>
            <person name="McVean G."/>
            <person name="Ross M.T."/>
            <person name="Harrow J."/>
            <person name="Olson M.V."/>
            <person name="Beck S."/>
            <person name="Rogers J."/>
            <person name="Bentley D.R."/>
        </authorList>
    </citation>
    <scope>NUCLEOTIDE SEQUENCE [LARGE SCALE GENOMIC DNA]</scope>
</reference>
<reference key="8">
    <citation type="submission" date="2005-09" db="EMBL/GenBank/DDBJ databases">
        <authorList>
            <person name="Mural R.J."/>
            <person name="Istrail S."/>
            <person name="Sutton G.G."/>
            <person name="Florea L."/>
            <person name="Halpern A.L."/>
            <person name="Mobarry C.M."/>
            <person name="Lippert R."/>
            <person name="Walenz B."/>
            <person name="Shatkay H."/>
            <person name="Dew I."/>
            <person name="Miller J.R."/>
            <person name="Flanigan M.J."/>
            <person name="Edwards N.J."/>
            <person name="Bolanos R."/>
            <person name="Fasulo D."/>
            <person name="Halldorsson B.V."/>
            <person name="Hannenhalli S."/>
            <person name="Turner R."/>
            <person name="Yooseph S."/>
            <person name="Lu F."/>
            <person name="Nusskern D.R."/>
            <person name="Shue B.C."/>
            <person name="Zheng X.H."/>
            <person name="Zhong F."/>
            <person name="Delcher A.L."/>
            <person name="Huson D.H."/>
            <person name="Kravitz S.A."/>
            <person name="Mouchard L."/>
            <person name="Reinert K."/>
            <person name="Remington K.A."/>
            <person name="Clark A.G."/>
            <person name="Waterman M.S."/>
            <person name="Eichler E.E."/>
            <person name="Adams M.D."/>
            <person name="Hunkapiller M.W."/>
            <person name="Myers E.W."/>
            <person name="Venter J.C."/>
        </authorList>
    </citation>
    <scope>NUCLEOTIDE SEQUENCE [LARGE SCALE GENOMIC DNA]</scope>
</reference>
<reference key="9">
    <citation type="journal article" date="2004" name="Genome Res.">
        <title>The status, quality, and expansion of the NIH full-length cDNA project: the Mammalian Gene Collection (MGC).</title>
        <authorList>
            <consortium name="The MGC Project Team"/>
        </authorList>
    </citation>
    <scope>NUCLEOTIDE SEQUENCE [LARGE SCALE MRNA] (ISOFORM 3)</scope>
    <source>
        <tissue>Lymph</tissue>
    </source>
</reference>
<reference key="10">
    <citation type="journal article" date="1988" name="Mol. Cell. Biol.">
        <title>Structure of the murine lck gene and its rearrangement in a murine lymphoma cell line.</title>
        <authorList>
            <person name="Garvin A.M."/>
            <person name="Pawar S."/>
            <person name="Marth J.D."/>
            <person name="Perlmutter R.M."/>
        </authorList>
    </citation>
    <scope>NUCLEOTIDE SEQUENCE [GENOMIC DNA] OF 1-35</scope>
</reference>
<reference key="11">
    <citation type="journal article" date="1989" name="Mol. Cell. Biol.">
        <title>Structure of the two promoters of the human lck gene: differential accumulation of two classes of lck transcripts in T cells.</title>
        <authorList>
            <person name="Takadera T."/>
            <person name="Leung S."/>
            <person name="Gernone A."/>
            <person name="Koga Y."/>
            <person name="Takihara Y."/>
            <person name="Miyamoto N.G."/>
            <person name="Mak T.W."/>
        </authorList>
    </citation>
    <scope>NUCLEOTIDE SEQUENCE [GENOMIC DNA] OF 1-35</scope>
</reference>
<reference key="12">
    <citation type="journal article" date="2000" name="Eur. J. Immunol.">
        <title>Defective recruitment and activation of ZAP-70 in common variable immunodeficiency patients with T cell defects.</title>
        <authorList>
            <person name="Boncristiano M."/>
            <person name="Majolini M.B."/>
            <person name="D'Elios M.M."/>
            <person name="Pacini S."/>
            <person name="Valensin S."/>
            <person name="Ulivieri C."/>
            <person name="Amedei A."/>
            <person name="Falini B."/>
            <person name="Del Prete G."/>
            <person name="Telford J.L."/>
            <person name="Baldari C.T."/>
        </authorList>
    </citation>
    <scope>NUCLEOTIDE SEQUENCE [MRNA] OF 14-509</scope>
    <source>
        <tissue>Peripheral blood lymphocyte</tissue>
    </source>
</reference>
<reference key="13">
    <citation type="journal article" date="1987" name="Oncogene Res.">
        <title>Expression of the lck tyrosine kinase gene in human colon carcinoma and other non-lymphoid human tumor cell lines.</title>
        <authorList>
            <person name="Veillette A."/>
            <person name="Foss F.M."/>
            <person name="Sausville E.A."/>
            <person name="Bolen J.B."/>
            <person name="Rosen N."/>
        </authorList>
    </citation>
    <scope>NUCLEOTIDE SEQUENCE [MRNA] OF 368-509</scope>
</reference>
<reference key="14">
    <citation type="journal article" date="1986" name="Biochim. Biophys. Acta">
        <title>Human T lymphocytes express a protein-tyrosine kinase homologous to p56LSTRA.</title>
        <authorList>
            <person name="Trevillyan J.M."/>
            <person name="Lin Y."/>
            <person name="Chen S.J."/>
            <person name="Phillips C.A."/>
            <person name="Canna C."/>
            <person name="Linna T.J."/>
        </authorList>
    </citation>
    <scope>NUCLEOTIDE SEQUENCE [MRNA] OF 375-509</scope>
</reference>
<reference key="15">
    <citation type="journal article" date="1992" name="EMBO J.">
        <title>The human p50csk tyrosine kinase phosphorylates p56lck at Tyr-505 and down regulates its catalytic activity.</title>
        <authorList>
            <person name="Bergman M."/>
            <person name="Mustelin T."/>
            <person name="Oetken C."/>
            <person name="Partanen J."/>
            <person name="Flint N.A."/>
            <person name="Amrein K.E."/>
            <person name="Autero M."/>
            <person name="Burn P."/>
            <person name="Alitalo K."/>
        </authorList>
    </citation>
    <scope>PHOSPHORYLATION AT TYR-505</scope>
</reference>
<reference key="16">
    <citation type="journal article" date="1993" name="Mol. Cell. Biol.">
        <title>The SH3 domain of p56lck is involved in binding to phosphatidylinositol 3'-kinase from T lymphocytes.</title>
        <authorList>
            <person name="Vogel L.B."/>
            <person name="Fujita D.J."/>
        </authorList>
    </citation>
    <scope>INTERACTION WITH PI3K</scope>
</reference>
<reference key="17">
    <citation type="journal article" date="1995" name="J. Biol. Chem.">
        <title>p70 phosphorylation and binding to p56lck is an early event in interleukin-2-induced onset of cell cycle progression in T-lymphocytes.</title>
        <authorList>
            <person name="Vogel L.B."/>
            <person name="Fujita D.J."/>
        </authorList>
    </citation>
    <scope>INTERACTION WITH KHDRBS1</scope>
</reference>
<reference key="18">
    <citation type="journal article" date="1995" name="Proc. Natl. Acad. Sci. U.S.A.">
        <title>Phosphotyrosine-independent binding of a 62-kDa protein to the src homology 2 (SH2) domain of p56lck and its regulation by phosphorylation of Ser-59 in the lck unique N-terminal region.</title>
        <authorList>
            <person name="Park I."/>
            <person name="Chung J."/>
            <person name="Walsh C.T."/>
            <person name="Yun Y."/>
            <person name="Strominger J.L."/>
            <person name="Shin J."/>
        </authorList>
    </citation>
    <scope>INTERACTION WITH SQSTM1</scope>
    <scope>MUTAGENESIS OF SER-59 AND ARG-154</scope>
</reference>
<reference key="19">
    <citation type="journal article" date="1996" name="J. Biol. Chem.">
        <title>Detection of a physical and functional interaction between Csk and Lck which involves the SH2 domain of Csk and is mediated by autophosphorylation of Lck on tyrosine 394.</title>
        <authorList>
            <person name="Bougeret C."/>
            <person name="Delaunay T."/>
            <person name="Romero F."/>
            <person name="Jullien P."/>
            <person name="Sabe H."/>
            <person name="Hanafusa H."/>
            <person name="Benarous R."/>
            <person name="Fischer S."/>
        </authorList>
    </citation>
    <scope>PHOSPHORYLATION AT TYR-505 BY CSK</scope>
    <scope>AUTOPHOSPHORYLATION</scope>
</reference>
<reference key="20">
    <citation type="journal article" date="1996" name="J. Virol.">
        <title>Human immunodeficiency virus type 1 Nef binds directly to LCK and mitogen-activated protein kinase, inhibiting kinase activity.</title>
        <authorList>
            <person name="Greenway A.L."/>
            <person name="Azad A."/>
            <person name="Mills J."/>
            <person name="McPhee D.A."/>
        </authorList>
    </citation>
    <scope>INTERACTION WITH HIV-1 NEF (MICROBIAL INFECTION)</scope>
</reference>
<reference key="21">
    <citation type="journal article" date="1997" name="Oncogene">
        <title>Intracellular signaling of the Ufo/Axl receptor tyrosine kinase is mediated mainly by a multi-substrate docking-site.</title>
        <authorList>
            <person name="Braunger J."/>
            <person name="Schleithoff L."/>
            <person name="Schulz A.S."/>
            <person name="Kessler H."/>
            <person name="Lammers R."/>
            <person name="Ullrich A."/>
            <person name="Bartram C.R."/>
            <person name="Janssen J.W."/>
        </authorList>
    </citation>
    <scope>INTERACTION WITH AXL</scope>
</reference>
<reference key="22">
    <citation type="journal article" date="2000" name="Eur. J. Biochem.">
        <title>Lck protein tyrosine kinase is a key regulator of T-cell activation and a target for signal intervention by Herpesvirus saimiri and other viral gene products.</title>
        <authorList>
            <person name="Isakov N."/>
            <person name="Biesinger B."/>
        </authorList>
    </citation>
    <scope>REVIEW</scope>
</reference>
<reference key="23">
    <citation type="journal article" date="2002" name="Biochim. Biophys. Acta">
        <title>The oxygen-substituted palmitic acid analogue, 13-oxypalmitic acid, inhibits Lck localization to lipid rafts and T cell signaling.</title>
        <authorList>
            <person name="Hawash I.Y."/>
            <person name="Hu X.E."/>
            <person name="Adal A."/>
            <person name="Cassady J.M."/>
            <person name="Geahlen R.L."/>
            <person name="Harrison M.L."/>
        </authorList>
    </citation>
    <scope>INTERACTION WITH CD48</scope>
</reference>
<reference key="24">
    <citation type="journal article" date="2002" name="Int. Immunol.">
        <title>BY55/CD160 acts as a co-receptor in TCR signal transduction of a human circulating cytotoxic effector T lymphocyte subset lacking CD28 expression.</title>
        <authorList>
            <person name="Nikolova M."/>
            <person name="Marie-Cardine A."/>
            <person name="Boumsell L."/>
            <person name="Bensussan A."/>
        </authorList>
    </citation>
    <scope>SUBUNIT</scope>
    <scope>INTERACTION WITH CD160</scope>
</reference>
<reference key="25">
    <citation type="journal article" date="2002" name="J. Immunol.">
        <title>Fyn is essential for tyrosine phosphorylation of Csk-binding protein/phosphoprotein associated with glycolipid-enriched microdomains in lipid rafts in resting T cells.</title>
        <authorList>
            <person name="Yasuda K."/>
            <person name="Nagafuku M."/>
            <person name="Shima T."/>
            <person name="Okada M."/>
            <person name="Yagi T."/>
            <person name="Yamada T."/>
            <person name="Minaki Y."/>
            <person name="Kato A."/>
            <person name="Tani-Ichi S."/>
            <person name="Hamaoka T."/>
            <person name="Kosugi A."/>
        </authorList>
    </citation>
    <scope>SUBCELLULAR LOCATION</scope>
</reference>
<reference key="26">
    <citation type="journal article" date="2002" name="Proteomics">
        <title>Cluster analysis of an extensive human breast cancer cell line protein expression map database.</title>
        <authorList>
            <person name="Harris R.A."/>
            <person name="Yang A."/>
            <person name="Stein R.C."/>
            <person name="Lucy K."/>
            <person name="Brusten L."/>
            <person name="Herath A."/>
            <person name="Parekh R."/>
            <person name="Waterfield M.D."/>
            <person name="O'Hare M.J."/>
            <person name="Neville M.A."/>
            <person name="Page M.J."/>
            <person name="Zvelebil M.J."/>
        </authorList>
    </citation>
    <scope>MASS SPECTROMETRY</scope>
    <source>
        <tissue>Mammary cancer</tissue>
    </source>
</reference>
<reference key="27">
    <citation type="journal article" date="2003" name="J. Exp. Med.">
        <title>LIME: a new membrane raft-associated adaptor protein involved in CD4 and CD8 coreceptor signaling.</title>
        <authorList>
            <person name="Brdickova N."/>
            <person name="Brdicka T."/>
            <person name="Angelisova P."/>
            <person name="Horvath O."/>
            <person name="Spicka J."/>
            <person name="Hilgert I."/>
            <person name="Paces J."/>
            <person name="Simeoni L."/>
            <person name="Kliche S."/>
            <person name="Merten C."/>
            <person name="Schraven B."/>
            <person name="Horejsi V."/>
        </authorList>
    </citation>
    <scope>INTERACTION WITH LIME1</scope>
</reference>
<reference key="28">
    <citation type="journal article" date="2003" name="J. Exp. Med.">
        <title>LIME, a novel transmembrane adaptor protein, associates with p56lck and mediates T cell activation.</title>
        <authorList>
            <person name="Hur E.M."/>
            <person name="Son M."/>
            <person name="Lee O.-H."/>
            <person name="Choi Y.B."/>
            <person name="Park C."/>
            <person name="Lee H."/>
            <person name="Yun Y."/>
        </authorList>
    </citation>
    <scope>INTERACTION WITH LIME1</scope>
</reference>
<reference key="29">
    <citation type="journal article" date="2003" name="J. Biol. Chem.">
        <title>Interaction of SAP-1, a transmembrane-type protein-tyrosine phosphatase, with the tyrosine kinase Lck. Roles in regulation of T cell function.</title>
        <authorList>
            <person name="Ito T."/>
            <person name="Okazawa H."/>
            <person name="Maruyama K."/>
            <person name="Tomizawa K."/>
            <person name="Motegi S."/>
            <person name="Ohnishi H."/>
            <person name="Kuwano H."/>
            <person name="Kosugi A."/>
            <person name="Matozaki T."/>
        </authorList>
    </citation>
    <scope>INTERACTION WITH PTPRH</scope>
</reference>
<reference key="30">
    <citation type="journal article" date="2004" name="J. Exp. Med.">
        <title>Unc119, a novel activator of Lck/Fyn, is essential for T cell activation.</title>
        <authorList>
            <person name="Gorska M.M."/>
            <person name="Stafford S.J."/>
            <person name="Cen O."/>
            <person name="Sur S."/>
            <person name="Alam R."/>
        </authorList>
    </citation>
    <scope>INTERACTION WITH UNC119</scope>
</reference>
<reference key="31">
    <citation type="journal article" date="2005" name="J. Immunol.">
        <title>T cell activation-induced CrkII binding to the Zap70 protein tyrosine kinase is mediated by Lck-dependent phosphorylation of Zap70 tyrosine 315.</title>
        <authorList>
            <person name="Gelkop S."/>
            <person name="Gish G.D."/>
            <person name="Babichev Y."/>
            <person name="Pawson T."/>
            <person name="Isakov N."/>
        </authorList>
    </citation>
    <scope>FUNCTION IN PHOSPHORYLATION OF ZAP70</scope>
</reference>
<reference key="32">
    <citation type="journal article" date="2005" name="Nat. Biotechnol.">
        <title>Immunoaffinity profiling of tyrosine phosphorylation in cancer cells.</title>
        <authorList>
            <person name="Rush J."/>
            <person name="Moritz A."/>
            <person name="Lee K.A."/>
            <person name="Guo A."/>
            <person name="Goss V.L."/>
            <person name="Spek E.J."/>
            <person name="Zhang H."/>
            <person name="Zha X.-M."/>
            <person name="Polakiewicz R.D."/>
            <person name="Comb M.J."/>
        </authorList>
    </citation>
    <scope>PHOSPHORYLATION [LARGE SCALE ANALYSIS] AT TYR-505</scope>
    <scope>IDENTIFICATION BY MASS SPECTROMETRY [LARGE SCALE ANALYSIS]</scope>
</reference>
<reference key="33">
    <citation type="journal article" date="2006" name="J. Biol. Chem.">
        <title>Identification of substrates of human protein-tyrosine phosphatase PTPN22.</title>
        <authorList>
            <person name="Wu J."/>
            <person name="Katrekar A."/>
            <person name="Honigberg L.A."/>
            <person name="Smith A.M."/>
            <person name="Conn M.T."/>
            <person name="Tang J."/>
            <person name="Jeffery D."/>
            <person name="Mortara K."/>
            <person name="Sampang J."/>
            <person name="Williams S.R."/>
            <person name="Buggy J."/>
            <person name="Clark J.M."/>
        </authorList>
    </citation>
    <scope>DEPHOSPHORYLATION BY PTN22</scope>
</reference>
<reference key="34">
    <citation type="journal article" date="2006" name="J. Immunol.">
        <title>Regulation of Ly49D/DAP12 signal transduction by Src-family kinases and CD45.</title>
        <authorList>
            <person name="Mason L.H."/>
            <person name="Willette-Brown J."/>
            <person name="Taylor L.S."/>
            <person name="McVicar D.W."/>
        </authorList>
    </citation>
    <scope>FUNCTION IN PHOSPHORYLATION OF TYROBP</scope>
</reference>
<reference key="35">
    <citation type="journal article" date="2007" name="Eur. J. Immunol.">
        <title>Ephrin-A1 stimulates migration of CD8+CCR7+ T lymphocytes.</title>
        <authorList>
            <person name="Hjorthaug H.S."/>
            <person name="Aasheim H.C."/>
        </authorList>
    </citation>
    <scope>INTERACTION WITH EPHA1; PTK2B AND PI3-KINASE</scope>
</reference>
<reference key="36">
    <citation type="journal article" date="2008" name="J. Immunol.">
        <title>Carcinoembryonic antigen-related cell adhesion molecule 1 inhibits proximal TCR signaling by targeting ZAP-70.</title>
        <authorList>
            <person name="Chen Z."/>
            <person name="Chen L."/>
            <person name="Qiao S.W."/>
            <person name="Nagaishi T."/>
            <person name="Blumberg R.S."/>
        </authorList>
    </citation>
    <scope>INTERACTION WITH CEACAM1</scope>
</reference>
<reference key="37">
    <citation type="journal article" date="2008" name="Mol. Cell">
        <title>Kinase-selective enrichment enables quantitative phosphoproteomics of the kinome across the cell cycle.</title>
        <authorList>
            <person name="Daub H."/>
            <person name="Olsen J.V."/>
            <person name="Bairlein M."/>
            <person name="Gnad F."/>
            <person name="Oppermann F.S."/>
            <person name="Korner R."/>
            <person name="Greff Z."/>
            <person name="Keri G."/>
            <person name="Stemmann O."/>
            <person name="Mann M."/>
        </authorList>
    </citation>
    <scope>PHOSPHORYLATION [LARGE SCALE ANALYSIS] AT TYR-505</scope>
    <scope>IDENTIFICATION BY MASS SPECTROMETRY [LARGE SCALE ANALYSIS]</scope>
    <source>
        <tissue>Cervix carcinoma</tissue>
    </source>
</reference>
<reference key="38">
    <citation type="journal article" date="2009" name="Mol. Cell. Proteomics">
        <title>Large-scale proteomics analysis of the human kinome.</title>
        <authorList>
            <person name="Oppermann F.S."/>
            <person name="Gnad F."/>
            <person name="Olsen J.V."/>
            <person name="Hornberger R."/>
            <person name="Greff Z."/>
            <person name="Keri G."/>
            <person name="Mann M."/>
            <person name="Daub H."/>
        </authorList>
    </citation>
    <scope>PHOSPHORYLATION [LARGE SCALE ANALYSIS] AT TYR-505</scope>
    <scope>IDENTIFICATION BY MASS SPECTROMETRY [LARGE SCALE ANALYSIS]</scope>
</reference>
<reference key="39">
    <citation type="journal article" date="2009" name="Sci. Signal.">
        <title>Quantitative phosphoproteomic analysis of T cell receptor signaling reveals system-wide modulation of protein-protein interactions.</title>
        <authorList>
            <person name="Mayya V."/>
            <person name="Lundgren D.H."/>
            <person name="Hwang S.-I."/>
            <person name="Rezaul K."/>
            <person name="Wu L."/>
            <person name="Eng J.K."/>
            <person name="Rodionov V."/>
            <person name="Han D.K."/>
        </authorList>
    </citation>
    <scope>PHOSPHORYLATION [LARGE SCALE ANALYSIS] AT SER-102; THR-159; SER-162; SER-194 AND TYR-505</scope>
    <scope>IDENTIFICATION BY MASS SPECTROMETRY [LARGE SCALE ANALYSIS]</scope>
    <source>
        <tissue>Leukemic T-cell</tissue>
    </source>
</reference>
<reference key="40">
    <citation type="journal article" date="2010" name="J. Biol. Chem.">
        <title>Src kinase phosphorylates RUNX3 at tyrosine residues and localizes the protein in the cytoplasm.</title>
        <authorList>
            <person name="Goh Y.M."/>
            <person name="Cinghu S."/>
            <person name="Hong E.T."/>
            <person name="Lee Y.S."/>
            <person name="Kim J.H."/>
            <person name="Jang J.W."/>
            <person name="Li Y.H."/>
            <person name="Chi X.Z."/>
            <person name="Lee K.S."/>
            <person name="Wee H."/>
            <person name="Ito Y."/>
            <person name="Oh B.C."/>
            <person name="Bae S.C."/>
        </authorList>
    </citation>
    <scope>FUNCTION IN PHOSPHORYLATION OF RUNX3</scope>
</reference>
<reference key="41">
    <citation type="journal article" date="2010" name="J. Leukoc. Biol.">
        <title>The T cell receptor-mediated phosphorylation of Pyk2 tyrosines 402 and 580 occurs via a distinct mechanism than other receptor systems.</title>
        <authorList>
            <person name="Collins M."/>
            <person name="Tremblay M."/>
            <person name="Chapman N."/>
            <person name="Curtiss M."/>
            <person name="Rothman P.B."/>
            <person name="Houtman J.C."/>
        </authorList>
    </citation>
    <scope>FUNCTION IN PTK2B/PYK2 PHOSPHORYLATION</scope>
</reference>
<reference key="42">
    <citation type="journal article" date="2011" name="Cell. Signal.">
        <title>RhoH modulates pre-TCR and TCR signalling by regulating LCK.</title>
        <authorList>
            <person name="Wang H."/>
            <person name="Zeng X."/>
            <person name="Fan Z."/>
            <person name="Lim B."/>
        </authorList>
    </citation>
    <scope>FUNCTION IN PHOSPHORYLATION OF RHOH</scope>
</reference>
<reference key="43">
    <citation type="journal article" date="2011" name="J. Clin. Invest.">
        <title>T cell protein tyrosine phosphatase attenuates T cell signaling to maintain tolerance in mice.</title>
        <authorList>
            <person name="Wiede F."/>
            <person name="Shields B.J."/>
            <person name="Chew S.H."/>
            <person name="Kyparissoudis K."/>
            <person name="van Vliet C."/>
            <person name="Galic S."/>
            <person name="Tremblay M.L."/>
            <person name="Russell S.M."/>
            <person name="Godfrey D.I."/>
            <person name="Tiganis T."/>
        </authorList>
    </citation>
    <scope>FUNCTION IN TCR SIGNALING</scope>
    <scope>PHOSPHORYLATION</scope>
    <scope>DEPHOSPHORYLATION AT TYR-394 BY PTPN2</scope>
</reference>
<reference key="44">
    <citation type="journal article" date="2011" name="Mol. Membr. Biol.">
        <title>DHHC2 is a protein S-acyltransferase for Lck.</title>
        <authorList>
            <person name="Zeidman R."/>
            <person name="Buckland G."/>
            <person name="Cebecauer M."/>
            <person name="Eissmann P."/>
            <person name="Davis D.M."/>
            <person name="Magee A.I."/>
        </authorList>
    </citation>
    <scope>SUBCELLULAR LOCATION</scope>
    <scope>TOPOLOGY</scope>
    <scope>PALMITOYLATION</scope>
</reference>
<reference key="45">
    <citation type="journal article" date="2011" name="Mol. Neurodegener.">
        <title>Tyrosine phosphorylation of tau by the SRC family kinases lck and fyn.</title>
        <authorList>
            <person name="Scales T.M."/>
            <person name="Derkinderen P."/>
            <person name="Leung K.Y."/>
            <person name="Byers H.L."/>
            <person name="Ward M.A."/>
            <person name="Price C."/>
            <person name="Bird I.N."/>
            <person name="Perera T."/>
            <person name="Kellie S."/>
            <person name="Williamson R."/>
            <person name="Anderton B.H."/>
            <person name="Reynolds C.H."/>
        </authorList>
    </citation>
    <scope>FUNCTION IN PHOSPHORYLATION OF MAPT</scope>
</reference>
<reference key="46">
    <citation type="journal article" date="2011" name="Sci. Signal.">
        <title>Feedback circuits monitor and adjust Basal lck-dependent events in T cell receptor signaling.</title>
        <authorList>
            <person name="Schoenborn J.R."/>
            <person name="Tan Y.X."/>
            <person name="Zhang C."/>
            <person name="Shokat K.M."/>
            <person name="Weiss A."/>
        </authorList>
    </citation>
    <scope>ACTIVITY REGULATION</scope>
</reference>
<reference key="47">
    <citation type="journal article" date="2011" name="Sci. Signal.">
        <title>System-wide temporal characterization of the proteome and phosphoproteome of human embryonic stem cell differentiation.</title>
        <authorList>
            <person name="Rigbolt K.T."/>
            <person name="Prokhorova T.A."/>
            <person name="Akimov V."/>
            <person name="Henningsen J."/>
            <person name="Johansen P.T."/>
            <person name="Kratchmarova I."/>
            <person name="Kassem M."/>
            <person name="Mann M."/>
            <person name="Olsen J.V."/>
            <person name="Blagoev B."/>
        </authorList>
    </citation>
    <scope>PHOSPHORYLATION [LARGE SCALE ANALYSIS] AT TYR-505</scope>
    <scope>IDENTIFICATION BY MASS SPECTROMETRY [LARGE SCALE ANALYSIS]</scope>
</reference>
<reference key="48">
    <citation type="journal article" date="2013" name="J. Virol.">
        <title>Role of herpes simplex virus VP11/12 tyrosine-based motifs in binding and activation of the Src family kinase Lck and recruitment of p85, Grb2, and Shc.</title>
        <authorList>
            <person name="Strunk U."/>
            <person name="Saffran H.A."/>
            <person name="Wu F.W."/>
            <person name="Smiley J.R."/>
        </authorList>
    </citation>
    <scope>INTERACTION WITH HERPES SIMPLEX VIRUS 1 UL46 (MICROBIAL INFECTION)</scope>
</reference>
<reference key="49">
    <citation type="journal article" date="2014" name="Nat. Commun.">
        <title>The phosphatase JKAP/DUSP22 inhibits T-cell receptor signalling and autoimmunity by inactivating Lck.</title>
        <authorList>
            <person name="Li J.P."/>
            <person name="Yang C.Y."/>
            <person name="Chuang H.C."/>
            <person name="Lan J.L."/>
            <person name="Chen D.Y."/>
            <person name="Chen Y.M."/>
            <person name="Wang X."/>
            <person name="Chen A.J."/>
            <person name="Belmont J.W."/>
            <person name="Tan T.H."/>
        </authorList>
    </citation>
    <scope>DEPHOSPHORYLATION BY DUSP22</scope>
</reference>
<reference key="50">
    <citation type="journal article" date="2016" name="J. Immunol.">
        <title>ARAP, a novel adaptor protein, is required for TCR signaling and integrin-mediated adhesion.</title>
        <authorList>
            <person name="Jung S.H."/>
            <person name="Yoo E.H."/>
            <person name="Yu M.J."/>
            <person name="Song H.M."/>
            <person name="Kang H.Y."/>
            <person name="Cho J.Y."/>
            <person name="Lee J.R."/>
        </authorList>
    </citation>
    <scope>INTERACTION WITH FYB2 AND FYB1</scope>
</reference>
<reference key="51">
    <citation type="journal article" date="2024" name="Nat. Commun.">
        <title>The phosphatase DUSP22 inhibits UBR2-mediated K63-ubiquitination and activation of Lck downstream of TCR signalling.</title>
        <authorList>
            <person name="Shih Y.C."/>
            <person name="Chen H.F."/>
            <person name="Wu C.Y."/>
            <person name="Ciou Y.R."/>
            <person name="Wang C.W."/>
            <person name="Chuang H.C."/>
            <person name="Tan T.H."/>
        </authorList>
    </citation>
    <scope>DEPHOSPHORYLATION BY DUSP22</scope>
    <scope>UBIQUITINATION AT LYS-99 AND LYS-276</scope>
    <scope>MUTAGENESIS OF LYS-99; LYS-276 AND TYR-394</scope>
</reference>
<reference key="52">
    <citation type="journal article" date="2024" name="Cell">
        <title>ITPRIPL1 binds CD3epsilon to impede T cell activation and enable tumor immune evasion.</title>
        <authorList>
            <person name="Deng S."/>
            <person name="Zhang Y."/>
            <person name="Wang H."/>
            <person name="Liang W."/>
            <person name="Xie L."/>
            <person name="Li N."/>
            <person name="Fang Y."/>
            <person name="Wang Y."/>
            <person name="Liu J."/>
            <person name="Chi H."/>
            <person name="Sun Y."/>
            <person name="Ye R."/>
            <person name="Shan L."/>
            <person name="Shi J."/>
            <person name="Shen Z."/>
            <person name="Wang Y."/>
            <person name="Wang S."/>
            <person name="Brosseau J.P."/>
            <person name="Wang F."/>
            <person name="Liu G."/>
            <person name="Quan Y."/>
            <person name="Xu J."/>
        </authorList>
    </citation>
    <scope>FUNCTION</scope>
</reference>
<reference key="53">
    <citation type="journal article" date="1994" name="Nature">
        <title>Structure of the regulatory domains of the Src-family tyrosine kinase Lck.</title>
        <authorList>
            <person name="Eck M.J."/>
            <person name="Atweell S.K."/>
            <person name="Shoelson S.E."/>
            <person name="Harrison S.C."/>
        </authorList>
    </citation>
    <scope>X-RAY CRYSTALLOGRAPHY (2.5 ANGSTROMS) OF 53-226</scope>
</reference>
<reference key="54">
    <citation type="journal article" date="1995" name="J. Mol. Biol.">
        <title>The crystal structures of the SH2 domain of p56lck complexed with two phosphonopeptides suggest a gated peptide binding site.</title>
        <authorList>
            <person name="Mikol V."/>
            <person name="Baumann G."/>
            <person name="Keller T.H."/>
            <person name="Manning U.M."/>
            <person name="Zurini M.G.M."/>
        </authorList>
    </citation>
    <scope>X-RAY CRYSTALLOGRAPHY (2.25 ANGSTROMS) OF 127-221</scope>
</reference>
<reference key="55">
    <citation type="journal article" date="1996" name="J. Mol. Biol.">
        <title>Crystal structures of the human p56lck SH2 domain in complex with two short phosphotyrosyl peptides at 1.0-A and 1.8-A resolution.</title>
        <authorList>
            <person name="Tong L."/>
            <person name="Warren T.C."/>
            <person name="King J."/>
            <person name="Betageri R."/>
            <person name="Rose J."/>
            <person name="Jakes S."/>
        </authorList>
    </citation>
    <scope>X-RAY CRYSTALLOGRAPHY (1.0 ANGSTROMS) OF 122-226</scope>
</reference>
<reference key="56">
    <citation type="journal article" date="1996" name="Nature">
        <title>Structural basis for activation of human lymphocyte kinase Lck upon tyrosine phosphorylation.</title>
        <authorList>
            <person name="Yamaguchi H."/>
            <person name="Hendrickson W.A."/>
        </authorList>
    </citation>
    <scope>X-RAY CRYSTALLOGRAPHY (1.7 ANGSTROMS) OF 231-501</scope>
</reference>
<reference key="57">
    <citation type="journal article" date="1998" name="J. Biol. Chem.">
        <title>Carboxymethyl-phenylalanine as a replacement for phosphotyrosine in SH2 domain binding.</title>
        <authorList>
            <person name="Tong L."/>
            <person name="Warren T.C."/>
            <person name="Lukas S."/>
            <person name="Schembri-King J."/>
            <person name="Betageri R."/>
            <person name="Proudfoot J.R."/>
            <person name="Jakes S."/>
        </authorList>
    </citation>
    <scope>X-RAY CRYSTALLOGRAPHY (1.8 ANGSTROMS) OF 119-226</scope>
</reference>
<reference key="58">
    <citation type="journal article" date="2012" name="J. Allergy Clin. Immunol.">
        <title>Primary T-cell immunodeficiency with immunodysregulation caused by autosomal recessive LCK deficiency.</title>
        <authorList>
            <person name="Hauck F."/>
            <person name="Randriamampita C."/>
            <person name="Martin E."/>
            <person name="Gerart S."/>
            <person name="Lambert N."/>
            <person name="Lim A."/>
            <person name="Soulier J."/>
            <person name="Maciorowski Z."/>
            <person name="Touzot F."/>
            <person name="Moshous D."/>
            <person name="Quartier P."/>
            <person name="Heritier S."/>
            <person name="Blanche S."/>
            <person name="Rieux-Laucat F."/>
            <person name="Brousse N."/>
            <person name="Callebaut I."/>
            <person name="Veillette A."/>
            <person name="Hivroz C."/>
            <person name="Fischer A."/>
            <person name="Latour S."/>
            <person name="Picard C."/>
        </authorList>
    </citation>
    <scope>VARIANT IMD22 PRO-341</scope>
</reference>